<name>R1AB_MERS1</name>
<gene>
    <name type="primary">rep</name>
    <name type="ORF">1a-1b</name>
</gene>
<evidence type="ECO:0000250" key="1"/>
<evidence type="ECO:0000250" key="2">
    <source>
        <dbReference type="UniProtKB" id="P0C6X7"/>
    </source>
</evidence>
<evidence type="ECO:0000250" key="3">
    <source>
        <dbReference type="UniProtKB" id="P0DTD1"/>
    </source>
</evidence>
<evidence type="ECO:0000255" key="4"/>
<evidence type="ECO:0000255" key="5">
    <source>
        <dbReference type="PROSITE-ProRule" id="PRU00214"/>
    </source>
</evidence>
<evidence type="ECO:0000255" key="6">
    <source>
        <dbReference type="PROSITE-ProRule" id="PRU00444"/>
    </source>
</evidence>
<evidence type="ECO:0000255" key="7">
    <source>
        <dbReference type="PROSITE-ProRule" id="PRU00490"/>
    </source>
</evidence>
<evidence type="ECO:0000255" key="8">
    <source>
        <dbReference type="PROSITE-ProRule" id="PRU00539"/>
    </source>
</evidence>
<evidence type="ECO:0000255" key="9">
    <source>
        <dbReference type="PROSITE-ProRule" id="PRU00772"/>
    </source>
</evidence>
<evidence type="ECO:0000255" key="10">
    <source>
        <dbReference type="PROSITE-ProRule" id="PRU00986"/>
    </source>
</evidence>
<evidence type="ECO:0000255" key="11">
    <source>
        <dbReference type="PROSITE-ProRule" id="PRU01289"/>
    </source>
</evidence>
<evidence type="ECO:0000255" key="12">
    <source>
        <dbReference type="PROSITE-ProRule" id="PRU01290"/>
    </source>
</evidence>
<evidence type="ECO:0000255" key="13">
    <source>
        <dbReference type="PROSITE-ProRule" id="PRU01291"/>
    </source>
</evidence>
<evidence type="ECO:0000255" key="14">
    <source>
        <dbReference type="PROSITE-ProRule" id="PRU01292"/>
    </source>
</evidence>
<evidence type="ECO:0000255" key="15">
    <source>
        <dbReference type="PROSITE-ProRule" id="PRU01293"/>
    </source>
</evidence>
<evidence type="ECO:0000255" key="16">
    <source>
        <dbReference type="PROSITE-ProRule" id="PRU01294"/>
    </source>
</evidence>
<evidence type="ECO:0000255" key="17">
    <source>
        <dbReference type="PROSITE-ProRule" id="PRU01295"/>
    </source>
</evidence>
<evidence type="ECO:0000255" key="18">
    <source>
        <dbReference type="PROSITE-ProRule" id="PRU01296"/>
    </source>
</evidence>
<evidence type="ECO:0000255" key="19">
    <source>
        <dbReference type="PROSITE-ProRule" id="PRU01297"/>
    </source>
</evidence>
<evidence type="ECO:0000255" key="20">
    <source>
        <dbReference type="PROSITE-ProRule" id="PRU01298"/>
    </source>
</evidence>
<evidence type="ECO:0000255" key="21">
    <source>
        <dbReference type="PROSITE-ProRule" id="PRU01299"/>
    </source>
</evidence>
<evidence type="ECO:0000255" key="22">
    <source>
        <dbReference type="PROSITE-ProRule" id="PRU01300"/>
    </source>
</evidence>
<evidence type="ECO:0000255" key="23">
    <source>
        <dbReference type="PROSITE-ProRule" id="PRU01303"/>
    </source>
</evidence>
<evidence type="ECO:0000255" key="24">
    <source>
        <dbReference type="PROSITE-ProRule" id="PRU01305"/>
    </source>
</evidence>
<evidence type="ECO:0000255" key="25">
    <source>
        <dbReference type="PROSITE-ProRule" id="PRU01306"/>
    </source>
</evidence>
<evidence type="ECO:0000255" key="26">
    <source>
        <dbReference type="PROSITE-ProRule" id="PRU01307"/>
    </source>
</evidence>
<evidence type="ECO:0000255" key="27">
    <source>
        <dbReference type="PROSITE-ProRule" id="PRU01308"/>
    </source>
</evidence>
<evidence type="ECO:0000255" key="28">
    <source>
        <dbReference type="PROSITE-ProRule" id="PRU01333"/>
    </source>
</evidence>
<evidence type="ECO:0000255" key="29">
    <source>
        <dbReference type="PROSITE-ProRule" id="PRU01334"/>
    </source>
</evidence>
<evidence type="ECO:0000255" key="30">
    <source>
        <dbReference type="PROSITE-ProRule" id="PRU01335"/>
    </source>
</evidence>
<evidence type="ECO:0000255" key="31">
    <source>
        <dbReference type="PROSITE-ProRule" id="PRU01336"/>
    </source>
</evidence>
<evidence type="ECO:0000255" key="32">
    <source>
        <dbReference type="PROSITE-ProRule" id="PRU01337"/>
    </source>
</evidence>
<evidence type="ECO:0000255" key="33">
    <source>
        <dbReference type="PROSITE-ProRule" id="PRU01338"/>
    </source>
</evidence>
<evidence type="ECO:0000255" key="34">
    <source>
        <dbReference type="PROSITE-ProRule" id="PRU01344"/>
    </source>
</evidence>
<evidence type="ECO:0000269" key="35">
    <source>
    </source>
</evidence>
<evidence type="ECO:0000269" key="36">
    <source>
    </source>
</evidence>
<evidence type="ECO:0000269" key="37">
    <source>
    </source>
</evidence>
<evidence type="ECO:0000305" key="38"/>
<evidence type="ECO:0007829" key="39">
    <source>
        <dbReference type="PDB" id="4WUR"/>
    </source>
</evidence>
<evidence type="ECO:0007829" key="40">
    <source>
        <dbReference type="PDB" id="5HOL"/>
    </source>
</evidence>
<evidence type="ECO:0007829" key="41">
    <source>
        <dbReference type="PDB" id="5KO3"/>
    </source>
</evidence>
<evidence type="ECO:0007829" key="42">
    <source>
        <dbReference type="PDB" id="7DRA"/>
    </source>
</evidence>
<evidence type="ECO:0007829" key="43">
    <source>
        <dbReference type="PDB" id="7XRY"/>
    </source>
</evidence>
<evidence type="ECO:0007829" key="44">
    <source>
        <dbReference type="PDB" id="8CZV"/>
    </source>
</evidence>
<evidence type="ECO:0007829" key="45">
    <source>
        <dbReference type="PDB" id="8E6E"/>
    </source>
</evidence>
<evidence type="ECO:0007829" key="46">
    <source>
        <dbReference type="PDB" id="8HUT"/>
    </source>
</evidence>
<evidence type="ECO:0007829" key="47">
    <source>
        <dbReference type="PDB" id="8T4S"/>
    </source>
</evidence>
<proteinExistence type="evidence at protein level"/>
<protein>
    <recommendedName>
        <fullName>Replicase polyprotein 1ab</fullName>
        <shortName>pp1ab</shortName>
    </recommendedName>
    <alternativeName>
        <fullName>ORF1ab polyprotein</fullName>
    </alternativeName>
    <component>
        <recommendedName>
            <fullName>Host translation inhibitor nsp1</fullName>
            <shortName>nsp1</shortName>
        </recommendedName>
        <alternativeName>
            <fullName>Leader protein</fullName>
        </alternativeName>
    </component>
    <component>
        <recommendedName>
            <fullName>Non-structural protein 2</fullName>
            <shortName>nsp2</shortName>
        </recommendedName>
        <alternativeName>
            <fullName>p65 homolog</fullName>
        </alternativeName>
    </component>
    <component>
        <recommendedName>
            <fullName>Papain-like proteinase nsp3</fullName>
            <shortName>PL-PRO</shortName>
            <ecNumber>3.4.19.12</ecNumber>
            <ecNumber>3.4.22.-</ecNumber>
        </recommendedName>
        <alternativeName>
            <fullName>Non-structural protein 3</fullName>
            <shortName>nsp3</shortName>
        </alternativeName>
    </component>
    <component>
        <recommendedName>
            <fullName>Non-structural protein 4</fullName>
            <shortName>nsp4</shortName>
        </recommendedName>
    </component>
    <component>
        <recommendedName>
            <fullName>3C-like proteinase nsp5</fullName>
            <shortName>3CL-PRO</shortName>
            <shortName>3CLp</shortName>
            <ecNumber>3.4.22.-</ecNumber>
        </recommendedName>
        <alternativeName>
            <fullName>nsp5</fullName>
        </alternativeName>
    </component>
    <component>
        <recommendedName>
            <fullName>Non-structural protein 6</fullName>
            <shortName>nsp6</shortName>
        </recommendedName>
    </component>
    <component>
        <recommendedName>
            <fullName>Non-structural protein 7</fullName>
            <shortName>nsp7</shortName>
        </recommendedName>
    </component>
    <component>
        <recommendedName>
            <fullName>Non-structural protein 8</fullName>
            <shortName>nsp8</shortName>
        </recommendedName>
    </component>
    <component>
        <recommendedName>
            <fullName>Viral protein genome-linked nsp9</fullName>
        </recommendedName>
        <alternativeName>
            <fullName>Non-structural protein 9</fullName>
            <shortName>nsp9</shortName>
        </alternativeName>
        <alternativeName>
            <fullName>RNA-capping enzyme subunit nsp9</fullName>
        </alternativeName>
        <alternativeName>
            <fullName>p12</fullName>
        </alternativeName>
    </component>
    <component>
        <recommendedName>
            <fullName>Non-structural protein 10</fullName>
            <shortName>nsp10</shortName>
        </recommendedName>
        <alternativeName>
            <fullName>Growth factor-like peptide</fullName>
            <shortName>GFL</shortName>
        </alternativeName>
    </component>
    <component>
        <recommendedName>
            <fullName>RNA-directed RNA polymerase nsp12</fullName>
            <shortName>Pol</shortName>
            <shortName>RdRp</shortName>
            <ecNumber>2.7.7.48</ecNumber>
            <ecNumber>2.7.7.50</ecNumber>
        </recommendedName>
        <alternativeName>
            <fullName>nsp12</fullName>
        </alternativeName>
    </component>
    <component>
        <recommendedName>
            <fullName>Helicase nsp13</fullName>
            <shortName>Hel</shortName>
            <ecNumber>3.6.4.12</ecNumber>
            <ecNumber>3.6.4.13</ecNumber>
        </recommendedName>
        <alternativeName>
            <fullName>nsp13</fullName>
        </alternativeName>
    </component>
    <component>
        <recommendedName>
            <fullName>Guanine-N7 methyltransferase nsp14</fullName>
            <shortName>ExoN</shortName>
            <ecNumber>2.1.1.56</ecNumber>
            <ecNumber>3.1.13.-</ecNumber>
        </recommendedName>
        <alternativeName>
            <fullName>nsp14</fullName>
        </alternativeName>
    </component>
    <component>
        <recommendedName>
            <fullName>Uridylate-specific endoribonuclease nsp15</fullName>
            <ecNumber>4.6.1.-</ecNumber>
        </recommendedName>
        <alternativeName>
            <fullName>NendoU</fullName>
        </alternativeName>
        <alternativeName>
            <fullName>nsp15</fullName>
        </alternativeName>
    </component>
    <component>
        <recommendedName>
            <fullName>2'-O-methyltransferase nsp16</fullName>
            <ecNumber>2.1.1.57</ecNumber>
        </recommendedName>
        <alternativeName>
            <fullName>nsp16</fullName>
        </alternativeName>
    </component>
</protein>
<dbReference type="EC" id="3.4.19.12"/>
<dbReference type="EC" id="3.4.22.-"/>
<dbReference type="EC" id="2.7.7.48"/>
<dbReference type="EC" id="2.7.7.50"/>
<dbReference type="EC" id="3.6.4.12"/>
<dbReference type="EC" id="3.6.4.13"/>
<dbReference type="EC" id="2.1.1.56"/>
<dbReference type="EC" id="3.1.13.-"/>
<dbReference type="EC" id="4.6.1.-"/>
<dbReference type="EC" id="2.1.1.57"/>
<dbReference type="EMBL" id="KC164505">
    <property type="protein sequence ID" value="AFY13306.1"/>
    <property type="molecule type" value="Genomic_RNA"/>
</dbReference>
<dbReference type="PDB" id="4WUR">
    <property type="method" value="X-ray"/>
    <property type="resolution" value="3.16 A"/>
    <property type="chains" value="A=1482-1801"/>
</dbReference>
<dbReference type="PDB" id="5HOL">
    <property type="method" value="X-ray"/>
    <property type="resolution" value="1.59 A"/>
    <property type="chains" value="A=1109-1275"/>
</dbReference>
<dbReference type="PDB" id="5KO3">
    <property type="method" value="X-ray"/>
    <property type="resolution" value="1.95 A"/>
    <property type="chains" value="A=1544-1800"/>
</dbReference>
<dbReference type="PDB" id="7D3C">
    <property type="method" value="X-ray"/>
    <property type="resolution" value="2.20 A"/>
    <property type="chains" value="A/B=3248-3553"/>
</dbReference>
<dbReference type="PDB" id="7DR8">
    <property type="method" value="X-ray"/>
    <property type="resolution" value="2.34 A"/>
    <property type="chains" value="A/B=3248-3553"/>
</dbReference>
<dbReference type="PDB" id="7DR9">
    <property type="method" value="X-ray"/>
    <property type="resolution" value="2.78 A"/>
    <property type="chains" value="A/B=3248-3553"/>
</dbReference>
<dbReference type="PDB" id="7DRA">
    <property type="method" value="X-ray"/>
    <property type="resolution" value="2.78 A"/>
    <property type="chains" value="A/B=3248-3553"/>
</dbReference>
<dbReference type="PDB" id="7ENE">
    <property type="method" value="X-ray"/>
    <property type="resolution" value="2.98 A"/>
    <property type="chains" value="A/B/C/D=3248-3553"/>
</dbReference>
<dbReference type="PDB" id="7TQ7">
    <property type="method" value="X-ray"/>
    <property type="resolution" value="1.70 A"/>
    <property type="chains" value="A=3248-3553"/>
</dbReference>
<dbReference type="PDB" id="7TQ8">
    <property type="method" value="X-ray"/>
    <property type="resolution" value="1.65 A"/>
    <property type="chains" value="A=3248-3553"/>
</dbReference>
<dbReference type="PDB" id="7VTC">
    <property type="method" value="X-ray"/>
    <property type="resolution" value="2.54 A"/>
    <property type="chains" value="A/B=3250-3548"/>
</dbReference>
<dbReference type="PDB" id="7WQJ">
    <property type="method" value="X-ray"/>
    <property type="resolution" value="2.75 A"/>
    <property type="chains" value="A/B=3249-3548"/>
</dbReference>
<dbReference type="PDB" id="7XRY">
    <property type="method" value="X-ray"/>
    <property type="resolution" value="1.99 A"/>
    <property type="chains" value="A/B=3248-3548"/>
</dbReference>
<dbReference type="PDB" id="8CZT">
    <property type="method" value="X-ray"/>
    <property type="resolution" value="2.10 A"/>
    <property type="chains" value="A=3248-3553"/>
</dbReference>
<dbReference type="PDB" id="8CZU">
    <property type="method" value="X-ray"/>
    <property type="resolution" value="2.70 A"/>
    <property type="chains" value="A=3248-3553"/>
</dbReference>
<dbReference type="PDB" id="8CZV">
    <property type="method" value="X-ray"/>
    <property type="resolution" value="1.95 A"/>
    <property type="chains" value="A=3248-3553"/>
</dbReference>
<dbReference type="PDB" id="8DGY">
    <property type="method" value="X-ray"/>
    <property type="resolution" value="1.65 A"/>
    <property type="chains" value="A=3248-3553"/>
</dbReference>
<dbReference type="PDB" id="8E6B">
    <property type="method" value="X-ray"/>
    <property type="resolution" value="1.55 A"/>
    <property type="chains" value="A/B=3248-3553"/>
</dbReference>
<dbReference type="PDB" id="8E6C">
    <property type="method" value="X-ray"/>
    <property type="resolution" value="2.70 A"/>
    <property type="chains" value="A=3248-3553"/>
</dbReference>
<dbReference type="PDB" id="8E6D">
    <property type="method" value="X-ray"/>
    <property type="resolution" value="2.70 A"/>
    <property type="chains" value="A=3248-3553"/>
</dbReference>
<dbReference type="PDB" id="8E6E">
    <property type="method" value="X-ray"/>
    <property type="resolution" value="1.50 A"/>
    <property type="chains" value="A=3248-3553"/>
</dbReference>
<dbReference type="PDB" id="8E7T">
    <property type="method" value="X-ray"/>
    <property type="resolution" value="2.50 A"/>
    <property type="chains" value="A/B/C/D=3248-3553"/>
</dbReference>
<dbReference type="PDB" id="8HUT">
    <property type="method" value="X-ray"/>
    <property type="resolution" value="1.98 A"/>
    <property type="chains" value="A/B=3249-3548"/>
</dbReference>
<dbReference type="PDB" id="8IG6">
    <property type="method" value="X-ray"/>
    <property type="resolution" value="2.07 A"/>
    <property type="chains" value="A/B=3248-3550"/>
</dbReference>
<dbReference type="PDB" id="8J34">
    <property type="method" value="X-ray"/>
    <property type="resolution" value="2.30 A"/>
    <property type="chains" value="A/B=3250-3548"/>
</dbReference>
<dbReference type="PDB" id="8PPL">
    <property type="method" value="EM"/>
    <property type="resolution" value="2.65 A"/>
    <property type="chains" value="Aj=2-193"/>
</dbReference>
<dbReference type="PDB" id="8T4S">
    <property type="method" value="EM"/>
    <property type="resolution" value="2.60 A"/>
    <property type="chains" value="n=1-193"/>
</dbReference>
<dbReference type="PDBsum" id="4WUR"/>
<dbReference type="PDBsum" id="5HOL"/>
<dbReference type="PDBsum" id="5KO3"/>
<dbReference type="PDBsum" id="7D3C"/>
<dbReference type="PDBsum" id="7DR8"/>
<dbReference type="PDBsum" id="7DR9"/>
<dbReference type="PDBsum" id="7DRA"/>
<dbReference type="PDBsum" id="7ENE"/>
<dbReference type="PDBsum" id="7TQ7"/>
<dbReference type="PDBsum" id="7TQ8"/>
<dbReference type="PDBsum" id="7VTC"/>
<dbReference type="PDBsum" id="7WQJ"/>
<dbReference type="PDBsum" id="7XRY"/>
<dbReference type="PDBsum" id="8CZT"/>
<dbReference type="PDBsum" id="8CZU"/>
<dbReference type="PDBsum" id="8CZV"/>
<dbReference type="PDBsum" id="8DGY"/>
<dbReference type="PDBsum" id="8E6B"/>
<dbReference type="PDBsum" id="8E6C"/>
<dbReference type="PDBsum" id="8E6D"/>
<dbReference type="PDBsum" id="8E6E"/>
<dbReference type="PDBsum" id="8E7T"/>
<dbReference type="PDBsum" id="8HUT"/>
<dbReference type="PDBsum" id="8IG6"/>
<dbReference type="PDBsum" id="8J34"/>
<dbReference type="PDBsum" id="8PPL"/>
<dbReference type="PDBsum" id="8T4S"/>
<dbReference type="EMDB" id="EMD-17805"/>
<dbReference type="SASBDB" id="K9N7C7"/>
<dbReference type="SMR" id="K9N7C7"/>
<dbReference type="BioGRID" id="4383885">
    <property type="interactions" value="1"/>
</dbReference>
<dbReference type="BioGRID" id="4383886">
    <property type="interactions" value="24"/>
</dbReference>
<dbReference type="BioGRID" id="4383887">
    <property type="interactions" value="28"/>
</dbReference>
<dbReference type="BioGRID" id="4383888">
    <property type="interactions" value="138"/>
</dbReference>
<dbReference type="BioGRID" id="4383889">
    <property type="interactions" value="9"/>
</dbReference>
<dbReference type="BioGRID" id="4383890">
    <property type="interactions" value="23"/>
</dbReference>
<dbReference type="BioGRID" id="4383891">
    <property type="interactions" value="2"/>
</dbReference>
<dbReference type="BioGRID" id="4383892">
    <property type="interactions" value="23"/>
</dbReference>
<dbReference type="BioGRID" id="4383893">
    <property type="interactions" value="38"/>
</dbReference>
<dbReference type="BioGRID" id="4383894">
    <property type="interactions" value="13"/>
</dbReference>
<dbReference type="BioGRID" id="4383895">
    <property type="interactions" value="5"/>
</dbReference>
<dbReference type="BioGRID" id="4383896">
    <property type="interactions" value="2"/>
</dbReference>
<dbReference type="BioGRID" id="4383897">
    <property type="interactions" value="29"/>
</dbReference>
<dbReference type="BioGRID" id="4383898">
    <property type="interactions" value="11"/>
</dbReference>
<dbReference type="BioGRID" id="4383899">
    <property type="interactions" value="3"/>
</dbReference>
<dbReference type="BioGRID" id="4383900">
    <property type="interactions" value="19"/>
</dbReference>
<dbReference type="ComplexPortal" id="CPX-5746">
    <property type="entry name" value="MERS-CoV primase complex"/>
</dbReference>
<dbReference type="ComplexPortal" id="CPX-5772">
    <property type="entry name" value="MERS-CoV NSP3-NSP4 complex"/>
</dbReference>
<dbReference type="ComplexPortal" id="CPX-5777">
    <property type="entry name" value="MERS-CoV main protease complex"/>
</dbReference>
<dbReference type="ComplexPortal" id="CPX-5778">
    <property type="entry name" value="MERS-CoV NSP9 complex"/>
</dbReference>
<dbReference type="ComplexPortal" id="CPX-5779">
    <property type="entry name" value="MERS-CoV polymerase complex"/>
</dbReference>
<dbReference type="ComplexPortal" id="CPX-5783">
    <property type="entry name" value="MERS-CoV 3'-5' exoribonuclease proof-reading complex"/>
</dbReference>
<dbReference type="ComplexPortal" id="CPX-5784">
    <property type="entry name" value="MERS-CoV NSP10-NSP16 2'-O-methyltransferase complex"/>
</dbReference>
<dbReference type="ComplexPortal" id="CPX-5785">
    <property type="entry name" value="MERS-CoV NSP15 complex"/>
</dbReference>
<dbReference type="ComplexPortal" id="CPX-6463">
    <property type="entry name" value="MERS-CoV replication and transcription complex"/>
</dbReference>
<dbReference type="IntAct" id="K9N7C7">
    <property type="interactions" value="221"/>
</dbReference>
<dbReference type="BindingDB" id="K9N7C7"/>
<dbReference type="ChEMBL" id="CHEMBL4295557"/>
<dbReference type="DrugBank" id="DB15797">
    <property type="generic name" value="GC-373"/>
</dbReference>
<dbReference type="DrugBank" id="DB15796">
    <property type="generic name" value="GC-376 free acid"/>
</dbReference>
<dbReference type="DrugBank" id="DB14761">
    <property type="generic name" value="Remdesivir"/>
</dbReference>
<dbReference type="DrugCentral" id="K9N7C7"/>
<dbReference type="iPTMnet" id="K9N7C7"/>
<dbReference type="SABIO-RK" id="K9N7C7"/>
<dbReference type="EvolutionaryTrace" id="K9N7C7"/>
<dbReference type="Proteomes" id="UP000139997">
    <property type="component" value="Genome"/>
</dbReference>
<dbReference type="GO" id="GO:0044172">
    <property type="term" value="C:host cell endoplasmic reticulum-Golgi intermediate compartment"/>
    <property type="evidence" value="ECO:0007669"/>
    <property type="project" value="UniProtKB-SubCell"/>
</dbReference>
<dbReference type="GO" id="GO:0033644">
    <property type="term" value="C:host cell membrane"/>
    <property type="evidence" value="ECO:0007669"/>
    <property type="project" value="UniProtKB-SubCell"/>
</dbReference>
<dbReference type="GO" id="GO:0044220">
    <property type="term" value="C:host cell perinuclear region of cytoplasm"/>
    <property type="evidence" value="ECO:0007669"/>
    <property type="project" value="UniProtKB-SubCell"/>
</dbReference>
<dbReference type="GO" id="GO:0016020">
    <property type="term" value="C:membrane"/>
    <property type="evidence" value="ECO:0007669"/>
    <property type="project" value="UniProtKB-KW"/>
</dbReference>
<dbReference type="GO" id="GO:0000175">
    <property type="term" value="F:3'-5'-RNA exonuclease activity"/>
    <property type="evidence" value="ECO:0007669"/>
    <property type="project" value="InterPro"/>
</dbReference>
<dbReference type="GO" id="GO:0043139">
    <property type="term" value="F:5'-3' DNA helicase activity"/>
    <property type="evidence" value="ECO:0007669"/>
    <property type="project" value="TreeGrafter"/>
</dbReference>
<dbReference type="GO" id="GO:0005524">
    <property type="term" value="F:ATP binding"/>
    <property type="evidence" value="ECO:0007669"/>
    <property type="project" value="UniProtKB-KW"/>
</dbReference>
<dbReference type="GO" id="GO:0016887">
    <property type="term" value="F:ATP hydrolysis activity"/>
    <property type="evidence" value="ECO:0007669"/>
    <property type="project" value="RHEA"/>
</dbReference>
<dbReference type="GO" id="GO:0004843">
    <property type="term" value="F:cysteine-type deubiquitinase activity"/>
    <property type="evidence" value="ECO:0007669"/>
    <property type="project" value="UniProtKB-EC"/>
</dbReference>
<dbReference type="GO" id="GO:0004197">
    <property type="term" value="F:cysteine-type endopeptidase activity"/>
    <property type="evidence" value="ECO:0007669"/>
    <property type="project" value="InterPro"/>
</dbReference>
<dbReference type="GO" id="GO:0004519">
    <property type="term" value="F:endonuclease activity"/>
    <property type="evidence" value="ECO:0007669"/>
    <property type="project" value="UniProtKB-KW"/>
</dbReference>
<dbReference type="GO" id="GO:0002151">
    <property type="term" value="F:G-quadruplex RNA binding"/>
    <property type="evidence" value="ECO:0007669"/>
    <property type="project" value="InterPro"/>
</dbReference>
<dbReference type="GO" id="GO:0016829">
    <property type="term" value="F:lyase activity"/>
    <property type="evidence" value="ECO:0007669"/>
    <property type="project" value="UniProtKB-KW"/>
</dbReference>
<dbReference type="GO" id="GO:0004483">
    <property type="term" value="F:mRNA (nucleoside-2'-O-)-methyltransferase activity"/>
    <property type="evidence" value="ECO:0007669"/>
    <property type="project" value="InterPro"/>
</dbReference>
<dbReference type="GO" id="GO:0004482">
    <property type="term" value="F:mRNA 5'-cap (guanine-N7-)-methyltransferase activity"/>
    <property type="evidence" value="ECO:0007669"/>
    <property type="project" value="InterPro"/>
</dbReference>
<dbReference type="GO" id="GO:0008242">
    <property type="term" value="F:omega peptidase activity"/>
    <property type="evidence" value="ECO:0007669"/>
    <property type="project" value="InterPro"/>
</dbReference>
<dbReference type="GO" id="GO:0003724">
    <property type="term" value="F:RNA helicase activity"/>
    <property type="evidence" value="ECO:0007669"/>
    <property type="project" value="UniProtKB-EC"/>
</dbReference>
<dbReference type="GO" id="GO:0003968">
    <property type="term" value="F:RNA-directed RNA polymerase activity"/>
    <property type="evidence" value="ECO:0007669"/>
    <property type="project" value="UniProtKB-KW"/>
</dbReference>
<dbReference type="GO" id="GO:0003727">
    <property type="term" value="F:single-stranded RNA binding"/>
    <property type="evidence" value="ECO:0007669"/>
    <property type="project" value="InterPro"/>
</dbReference>
<dbReference type="GO" id="GO:0008270">
    <property type="term" value="F:zinc ion binding"/>
    <property type="evidence" value="ECO:0007669"/>
    <property type="project" value="UniProtKB-KW"/>
</dbReference>
<dbReference type="GO" id="GO:0006351">
    <property type="term" value="P:DNA-templated transcription"/>
    <property type="evidence" value="ECO:0007669"/>
    <property type="project" value="InterPro"/>
</dbReference>
<dbReference type="GO" id="GO:0006508">
    <property type="term" value="P:proteolysis"/>
    <property type="evidence" value="ECO:0007669"/>
    <property type="project" value="UniProtKB-KW"/>
</dbReference>
<dbReference type="GO" id="GO:0010506">
    <property type="term" value="P:regulation of autophagy"/>
    <property type="evidence" value="ECO:0007669"/>
    <property type="project" value="InterPro"/>
</dbReference>
<dbReference type="GO" id="GO:0039520">
    <property type="term" value="P:symbiont-mediated activation of host autophagy"/>
    <property type="evidence" value="ECO:0007669"/>
    <property type="project" value="UniProtKB-KW"/>
</dbReference>
<dbReference type="GO" id="GO:0039595">
    <property type="term" value="P:symbiont-mediated degradation of host mRNA"/>
    <property type="evidence" value="ECO:0007669"/>
    <property type="project" value="UniProtKB-KW"/>
</dbReference>
<dbReference type="GO" id="GO:0039648">
    <property type="term" value="P:symbiont-mediated perturbation of host ubiquitin-like protein modification"/>
    <property type="evidence" value="ECO:0007669"/>
    <property type="project" value="UniProtKB-KW"/>
</dbReference>
<dbReference type="GO" id="GO:0039657">
    <property type="term" value="P:symbiont-mediated suppression of host gene expression"/>
    <property type="evidence" value="ECO:0007669"/>
    <property type="project" value="UniProtKB-KW"/>
</dbReference>
<dbReference type="GO" id="GO:0039579">
    <property type="term" value="P:symbiont-mediated suppression of host ISG15-protein conjugation"/>
    <property type="evidence" value="ECO:0007669"/>
    <property type="project" value="UniProtKB-KW"/>
</dbReference>
<dbReference type="GO" id="GO:0085034">
    <property type="term" value="P:symbiont-mediated suppression of host NF-kappaB cascade"/>
    <property type="evidence" value="ECO:0007669"/>
    <property type="project" value="UniProtKB-KW"/>
</dbReference>
<dbReference type="GO" id="GO:0039502">
    <property type="term" value="P:symbiont-mediated suppression of host type I interferon-mediated signaling pathway"/>
    <property type="evidence" value="ECO:0007669"/>
    <property type="project" value="UniProtKB-KW"/>
</dbReference>
<dbReference type="GO" id="GO:0019082">
    <property type="term" value="P:viral protein processing"/>
    <property type="evidence" value="ECO:0007669"/>
    <property type="project" value="InterPro"/>
</dbReference>
<dbReference type="GO" id="GO:0039694">
    <property type="term" value="P:viral RNA genome replication"/>
    <property type="evidence" value="ECO:0007669"/>
    <property type="project" value="InterPro"/>
</dbReference>
<dbReference type="GO" id="GO:0075523">
    <property type="term" value="P:viral translational frameshifting"/>
    <property type="evidence" value="ECO:0007669"/>
    <property type="project" value="UniProtKB-KW"/>
</dbReference>
<dbReference type="CDD" id="cd21409">
    <property type="entry name" value="1B_cv_Nsp13-like"/>
    <property type="match status" value="1"/>
</dbReference>
<dbReference type="CDD" id="cd21901">
    <property type="entry name" value="alpha_betaCoV_Nsp10"/>
    <property type="match status" value="1"/>
</dbReference>
<dbReference type="CDD" id="cd21560">
    <property type="entry name" value="betaCoV-Nsp6"/>
    <property type="match status" value="1"/>
</dbReference>
<dbReference type="CDD" id="cd21722">
    <property type="entry name" value="betaCoV_Nsp13-helicase"/>
    <property type="match status" value="1"/>
</dbReference>
<dbReference type="CDD" id="cd21659">
    <property type="entry name" value="betaCoV_Nsp14"/>
    <property type="match status" value="1"/>
</dbReference>
<dbReference type="CDD" id="cd21517">
    <property type="entry name" value="betaCoV_Nsp2_MERS-like"/>
    <property type="match status" value="1"/>
</dbReference>
<dbReference type="CDD" id="cd21666">
    <property type="entry name" value="betaCoV_Nsp5_Mpro"/>
    <property type="match status" value="1"/>
</dbReference>
<dbReference type="CDD" id="cd21827">
    <property type="entry name" value="betaCoV_Nsp7"/>
    <property type="match status" value="1"/>
</dbReference>
<dbReference type="CDD" id="cd21831">
    <property type="entry name" value="betaCoV_Nsp8"/>
    <property type="match status" value="1"/>
</dbReference>
<dbReference type="CDD" id="cd21898">
    <property type="entry name" value="betaCoV_Nsp9"/>
    <property type="match status" value="1"/>
</dbReference>
<dbReference type="CDD" id="cd21732">
    <property type="entry name" value="betaCoV_PLPro"/>
    <property type="match status" value="1"/>
</dbReference>
<dbReference type="CDD" id="cd23528">
    <property type="entry name" value="capping_2-OMTase_betaCoV_Nsp16"/>
    <property type="match status" value="1"/>
</dbReference>
<dbReference type="CDD" id="cd21473">
    <property type="entry name" value="cv_Nsp4_TM"/>
    <property type="match status" value="1"/>
</dbReference>
<dbReference type="CDD" id="cd21167">
    <property type="entry name" value="M_alpha_beta_cv_Nsp15-like"/>
    <property type="match status" value="1"/>
</dbReference>
<dbReference type="CDD" id="cd21563">
    <property type="entry name" value="Macro_cv_SUD-M_Nsp3-like"/>
    <property type="match status" value="1"/>
</dbReference>
<dbReference type="CDD" id="cd21557">
    <property type="entry name" value="Macro_X_Nsp3-like"/>
    <property type="match status" value="1"/>
</dbReference>
<dbReference type="CDD" id="cd21878">
    <property type="entry name" value="MERS-CoV-like_Nsp1"/>
    <property type="match status" value="1"/>
</dbReference>
<dbReference type="CDD" id="cd21815">
    <property type="entry name" value="MERS-CoV-like_Nsp3_betaSM"/>
    <property type="match status" value="1"/>
</dbReference>
<dbReference type="CDD" id="cd21823">
    <property type="entry name" value="MERS-CoV-like_Nsp3_NAB"/>
    <property type="match status" value="1"/>
</dbReference>
<dbReference type="CDD" id="cd21592">
    <property type="entry name" value="MERS-CoV-like_RdRp"/>
    <property type="match status" value="1"/>
</dbReference>
<dbReference type="CDD" id="cd21158">
    <property type="entry name" value="NendoU_nv"/>
    <property type="match status" value="1"/>
</dbReference>
<dbReference type="CDD" id="cd21171">
    <property type="entry name" value="NTD_alpha_betaCoV_Nsp15-like"/>
    <property type="match status" value="1"/>
</dbReference>
<dbReference type="CDD" id="cd21689">
    <property type="entry name" value="stalk_CoV_Nsp13-like"/>
    <property type="match status" value="1"/>
</dbReference>
<dbReference type="CDD" id="cd21523">
    <property type="entry name" value="SUD_C_MERS-CoV_Nsp3"/>
    <property type="match status" value="1"/>
</dbReference>
<dbReference type="CDD" id="cd21716">
    <property type="entry name" value="TM_Y_MERS-CoV-like_Nsp3_C"/>
    <property type="match status" value="1"/>
</dbReference>
<dbReference type="CDD" id="cd21467">
    <property type="entry name" value="Ubl1_cv_Nsp3_N-like"/>
    <property type="match status" value="1"/>
</dbReference>
<dbReference type="CDD" id="cd21401">
    <property type="entry name" value="ZBD_cv_Nsp13-like"/>
    <property type="match status" value="1"/>
</dbReference>
<dbReference type="FunFam" id="3.40.220.10:FF:000017">
    <property type="entry name" value="ORF1a polyprotein"/>
    <property type="match status" value="1"/>
</dbReference>
<dbReference type="FunFam" id="3.40.50.11020:FF:000002">
    <property type="entry name" value="ORF1a polyprotein"/>
    <property type="match status" value="1"/>
</dbReference>
<dbReference type="FunFam" id="1.10.8.370:FF:000001">
    <property type="entry name" value="Orf1a polyprotein"/>
    <property type="match status" value="1"/>
</dbReference>
<dbReference type="FunFam" id="2.40.10.250:FF:000001">
    <property type="entry name" value="Orf1a polyprotein"/>
    <property type="match status" value="1"/>
</dbReference>
<dbReference type="FunFam" id="3.40.50.150:FF:000162">
    <property type="entry name" value="Orf1ab polyprotein"/>
    <property type="match status" value="1"/>
</dbReference>
<dbReference type="FunFam" id="3.40.50.300:FF:001105">
    <property type="entry name" value="Orf1ab polyprotein"/>
    <property type="match status" value="1"/>
</dbReference>
<dbReference type="FunFam" id="3.40.50.300:FF:001139">
    <property type="entry name" value="Orf1ab polyprotein"/>
    <property type="match status" value="1"/>
</dbReference>
<dbReference type="FunFam" id="1.10.150.420:FF:000001">
    <property type="entry name" value="Replicase polyprotein"/>
    <property type="match status" value="1"/>
</dbReference>
<dbReference type="FunFam" id="2.40.10.10:FF:000045">
    <property type="entry name" value="Replicase polyprotein 1a"/>
    <property type="match status" value="1"/>
</dbReference>
<dbReference type="Gene3D" id="1.10.8.1190">
    <property type="match status" value="1"/>
</dbReference>
<dbReference type="Gene3D" id="2.60.120.1680">
    <property type="match status" value="1"/>
</dbReference>
<dbReference type="Gene3D" id="3.10.20.350">
    <property type="match status" value="1"/>
</dbReference>
<dbReference type="Gene3D" id="3.10.20.540">
    <property type="match status" value="1"/>
</dbReference>
<dbReference type="Gene3D" id="3.40.50.11580">
    <property type="match status" value="1"/>
</dbReference>
<dbReference type="Gene3D" id="6.10.140.2090">
    <property type="match status" value="1"/>
</dbReference>
<dbReference type="Gene3D" id="1.10.150.420">
    <property type="entry name" value="Coronavirus nonstructural protein 4 C-terminus"/>
    <property type="match status" value="1"/>
</dbReference>
<dbReference type="Gene3D" id="3.40.220.10">
    <property type="entry name" value="Leucine Aminopeptidase, subunit E, domain 1"/>
    <property type="match status" value="1"/>
</dbReference>
<dbReference type="Gene3D" id="1.10.1840.10">
    <property type="entry name" value="main proteinase (3clpro) structure, domain 3"/>
    <property type="match status" value="1"/>
</dbReference>
<dbReference type="Gene3D" id="3.30.160.820">
    <property type="entry name" value="Nsp15 N-terminal domain-like"/>
    <property type="match status" value="1"/>
</dbReference>
<dbReference type="Gene3D" id="3.40.220.20">
    <property type="entry name" value="Nsp3, SUD-M subdomain"/>
    <property type="match status" value="1"/>
</dbReference>
<dbReference type="Gene3D" id="1.10.8.370">
    <property type="entry name" value="nsp7 replicase"/>
    <property type="match status" value="1"/>
</dbReference>
<dbReference type="Gene3D" id="3.30.70.3540">
    <property type="entry name" value="Nsp8 replicase, head domain"/>
    <property type="match status" value="1"/>
</dbReference>
<dbReference type="Gene3D" id="3.40.50.300">
    <property type="entry name" value="P-loop containing nucleotide triphosphate hydrolases"/>
    <property type="match status" value="2"/>
</dbReference>
<dbReference type="Gene3D" id="2.40.10.250">
    <property type="entry name" value="Replicase NSP9"/>
    <property type="match status" value="1"/>
</dbReference>
<dbReference type="Gene3D" id="3.40.50.11020">
    <property type="entry name" value="Replicase polyprotein, nucleic acid-binding domain"/>
    <property type="match status" value="1"/>
</dbReference>
<dbReference type="Gene3D" id="2.40.10.10">
    <property type="entry name" value="Trypsin-like serine proteases"/>
    <property type="match status" value="2"/>
</dbReference>
<dbReference type="Gene3D" id="3.40.50.150">
    <property type="entry name" value="Vaccinia Virus protein VP39"/>
    <property type="match status" value="1"/>
</dbReference>
<dbReference type="InterPro" id="IPR027351">
    <property type="entry name" value="(+)RNA_virus_helicase_core_dom"/>
</dbReference>
<dbReference type="InterPro" id="IPR046443">
    <property type="entry name" value="a/bCoV_NSP1_glob"/>
</dbReference>
<dbReference type="InterPro" id="IPR046440">
    <property type="entry name" value="AV_NSP11N_COV_NSP15M"/>
</dbReference>
<dbReference type="InterPro" id="IPR046442">
    <property type="entry name" value="bCoV_NSP1_C"/>
</dbReference>
<dbReference type="InterPro" id="IPR050534">
    <property type="entry name" value="Coronavir_polyprotein_1ab"/>
</dbReference>
<dbReference type="InterPro" id="IPR043608">
    <property type="entry name" value="CoV_NSP15_M"/>
</dbReference>
<dbReference type="InterPro" id="IPR043606">
    <property type="entry name" value="CoV_NSP15_N"/>
</dbReference>
<dbReference type="InterPro" id="IPR043613">
    <property type="entry name" value="CoV_NSP2_C"/>
</dbReference>
<dbReference type="InterPro" id="IPR047573">
    <property type="entry name" value="CoV_NSP2_M"/>
</dbReference>
<dbReference type="InterPro" id="IPR049894">
    <property type="entry name" value="COV_NSP3_3ECTO"/>
</dbReference>
<dbReference type="InterPro" id="IPR043611">
    <property type="entry name" value="CoV_NSP3_C"/>
</dbReference>
<dbReference type="InterPro" id="IPR047566">
    <property type="entry name" value="CoV_NSP3_Y"/>
</dbReference>
<dbReference type="InterPro" id="IPR032505">
    <property type="entry name" value="CoV_NSP4_C"/>
</dbReference>
<dbReference type="InterPro" id="IPR043612">
    <property type="entry name" value="CoV_NSP4_N"/>
</dbReference>
<dbReference type="InterPro" id="IPR043502">
    <property type="entry name" value="DNA/RNA_pol_sf"/>
</dbReference>
<dbReference type="InterPro" id="IPR041679">
    <property type="entry name" value="DNA2/NAM7-like_C"/>
</dbReference>
<dbReference type="InterPro" id="IPR022733">
    <property type="entry name" value="DPUP_SUD_C_bCoV"/>
</dbReference>
<dbReference type="InterPro" id="IPR037227">
    <property type="entry name" value="EndoU-like"/>
</dbReference>
<dbReference type="InterPro" id="IPR002589">
    <property type="entry name" value="Macro_dom"/>
</dbReference>
<dbReference type="InterPro" id="IPR043472">
    <property type="entry name" value="Macro_dom-like"/>
</dbReference>
<dbReference type="InterPro" id="IPR044371">
    <property type="entry name" value="Macro_X_NSP3-like"/>
</dbReference>
<dbReference type="InterPro" id="IPR046435">
    <property type="entry name" value="N7_MTase_CoV"/>
</dbReference>
<dbReference type="InterPro" id="IPR043609">
    <property type="entry name" value="NendoU_nidovirus"/>
</dbReference>
<dbReference type="InterPro" id="IPR044863">
    <property type="entry name" value="NIRAN"/>
</dbReference>
<dbReference type="InterPro" id="IPR046438">
    <property type="entry name" value="NIV_2_O_MTASE"/>
</dbReference>
<dbReference type="InterPro" id="IPR046436">
    <property type="entry name" value="NIV_EXON"/>
</dbReference>
<dbReference type="InterPro" id="IPR036333">
    <property type="entry name" value="NSP10_sf_CoV"/>
</dbReference>
<dbReference type="InterPro" id="IPR047570">
    <property type="entry name" value="NSP12_IF_CoV"/>
</dbReference>
<dbReference type="InterPro" id="IPR044343">
    <property type="entry name" value="NSP13_1B_dom_CoV"/>
</dbReference>
<dbReference type="InterPro" id="IPR048673">
    <property type="entry name" value="NSP13_stalk_CoV"/>
</dbReference>
<dbReference type="InterPro" id="IPR048672">
    <property type="entry name" value="NSP13_ZBD_CoV"/>
</dbReference>
<dbReference type="InterPro" id="IPR027352">
    <property type="entry name" value="NSP13_ZBD_CoV-like"/>
</dbReference>
<dbReference type="InterPro" id="IPR044315">
    <property type="entry name" value="NSP14_betaCoV"/>
</dbReference>
<dbReference type="InterPro" id="IPR009466">
    <property type="entry name" value="NSP14_CoV"/>
</dbReference>
<dbReference type="InterPro" id="IPR044330">
    <property type="entry name" value="NSP15_alpha_betaCoV_N"/>
</dbReference>
<dbReference type="InterPro" id="IPR044322">
    <property type="entry name" value="NSP15_M_alpha_beta_CoV"/>
</dbReference>
<dbReference type="InterPro" id="IPR043174">
    <property type="entry name" value="NSP15_middle_sf"/>
</dbReference>
<dbReference type="InterPro" id="IPR042515">
    <property type="entry name" value="NSP15_N_CoV"/>
</dbReference>
<dbReference type="InterPro" id="IPR009461">
    <property type="entry name" value="NSP16_CoV-like"/>
</dbReference>
<dbReference type="InterPro" id="IPR021590">
    <property type="entry name" value="NSP1_glob_bCoV"/>
</dbReference>
<dbReference type="InterPro" id="IPR044388">
    <property type="entry name" value="NSP2_MERS-like"/>
</dbReference>
<dbReference type="InterPro" id="IPR043615">
    <property type="entry name" value="NSP2_N_CoV"/>
</dbReference>
<dbReference type="InterPro" id="IPR024375">
    <property type="entry name" value="NSP3_bCoV"/>
</dbReference>
<dbReference type="InterPro" id="IPR047567">
    <property type="entry name" value="NSP3_G2M_bCoV"/>
</dbReference>
<dbReference type="InterPro" id="IPR032592">
    <property type="entry name" value="NSP3_NAB_bCoV"/>
</dbReference>
<dbReference type="InterPro" id="IPR042570">
    <property type="entry name" value="NSP3_NAB_bCoV_sf"/>
</dbReference>
<dbReference type="InterPro" id="IPR038400">
    <property type="entry name" value="NSP3_SUD-M_sf_bCoV"/>
</dbReference>
<dbReference type="InterPro" id="IPR044382">
    <property type="entry name" value="NSP3_SUD_C_MERS-CoV"/>
</dbReference>
<dbReference type="InterPro" id="IPR044357">
    <property type="entry name" value="NSP3_Ubl1_dom_CoV"/>
</dbReference>
<dbReference type="InterPro" id="IPR044353">
    <property type="entry name" value="Nsp3_Ubl2_dom_CoV"/>
</dbReference>
<dbReference type="InterPro" id="IPR038083">
    <property type="entry name" value="NSP3A-like"/>
</dbReference>
<dbReference type="InterPro" id="IPR038123">
    <property type="entry name" value="NSP4_C_sf_CoV"/>
</dbReference>
<dbReference type="InterPro" id="IPR044367">
    <property type="entry name" value="NSP6_betaCoV"/>
</dbReference>
<dbReference type="InterPro" id="IPR043610">
    <property type="entry name" value="NSP6_CoV"/>
</dbReference>
<dbReference type="InterPro" id="IPR014828">
    <property type="entry name" value="NSP7_CoV"/>
</dbReference>
<dbReference type="InterPro" id="IPR037204">
    <property type="entry name" value="NSP7_sf_CoV"/>
</dbReference>
<dbReference type="InterPro" id="IPR014829">
    <property type="entry name" value="NSP8_CoV"/>
</dbReference>
<dbReference type="InterPro" id="IPR037230">
    <property type="entry name" value="NSP8_sf_CoV"/>
</dbReference>
<dbReference type="InterPro" id="IPR014822">
    <property type="entry name" value="NSP9_CoV"/>
</dbReference>
<dbReference type="InterPro" id="IPR036499">
    <property type="entry name" value="NSP9_sf_CoV"/>
</dbReference>
<dbReference type="InterPro" id="IPR027417">
    <property type="entry name" value="P-loop_NTPase"/>
</dbReference>
<dbReference type="InterPro" id="IPR013016">
    <property type="entry name" value="Peptidase_C16_CoV"/>
</dbReference>
<dbReference type="InterPro" id="IPR008740">
    <property type="entry name" value="Peptidase_C30_CoV"/>
</dbReference>
<dbReference type="InterPro" id="IPR043477">
    <property type="entry name" value="Peptidase_C30_dom3_CoV"/>
</dbReference>
<dbReference type="InterPro" id="IPR009003">
    <property type="entry name" value="Peptidase_S1_PA"/>
</dbReference>
<dbReference type="InterPro" id="IPR043504">
    <property type="entry name" value="Peptidase_S1_PA_chymotrypsin"/>
</dbReference>
<dbReference type="InterPro" id="IPR043177">
    <property type="entry name" value="PLpro_N_sf_CoV"/>
</dbReference>
<dbReference type="InterPro" id="IPR043503">
    <property type="entry name" value="PLpro_palm_finger_dom_CoV"/>
</dbReference>
<dbReference type="InterPro" id="IPR043178">
    <property type="entry name" value="PLpro_thumb_sf_CoV"/>
</dbReference>
<dbReference type="InterPro" id="IPR046441">
    <property type="entry name" value="RdRp_CoV"/>
</dbReference>
<dbReference type="InterPro" id="IPR044350">
    <property type="entry name" value="RdRp_MERS-CoV-like"/>
</dbReference>
<dbReference type="InterPro" id="IPR009469">
    <property type="entry name" value="RdRp_N_CoV"/>
</dbReference>
<dbReference type="InterPro" id="IPR001205">
    <property type="entry name" value="RNA-dir_pol_C"/>
</dbReference>
<dbReference type="InterPro" id="IPR007094">
    <property type="entry name" value="RNA-dir_pol_PSvirus"/>
</dbReference>
<dbReference type="InterPro" id="IPR018995">
    <property type="entry name" value="RNA_synth_NSP10_CoV"/>
</dbReference>
<dbReference type="InterPro" id="IPR029063">
    <property type="entry name" value="SAM-dependent_MTases_sf"/>
</dbReference>
<dbReference type="PANTHER" id="PTHR43788:SF8">
    <property type="entry name" value="DNA-BINDING PROTEIN SMUBP-2"/>
    <property type="match status" value="1"/>
</dbReference>
<dbReference type="PANTHER" id="PTHR43788">
    <property type="entry name" value="DNA2/NAM7 HELICASE FAMILY MEMBER"/>
    <property type="match status" value="1"/>
</dbReference>
<dbReference type="Pfam" id="PF13087">
    <property type="entry name" value="AAA_12"/>
    <property type="match status" value="1"/>
</dbReference>
<dbReference type="Pfam" id="PF13604">
    <property type="entry name" value="AAA_30"/>
    <property type="match status" value="1"/>
</dbReference>
<dbReference type="Pfam" id="PF16251">
    <property type="entry name" value="bCoV_NAB"/>
    <property type="match status" value="1"/>
</dbReference>
<dbReference type="Pfam" id="PF11501">
    <property type="entry name" value="bCoV_NSP1"/>
    <property type="match status" value="1"/>
</dbReference>
<dbReference type="Pfam" id="PF11633">
    <property type="entry name" value="bCoV_SUD_M"/>
    <property type="match status" value="1"/>
</dbReference>
<dbReference type="Pfam" id="PF06471">
    <property type="entry name" value="CoV_ExoN"/>
    <property type="match status" value="1"/>
</dbReference>
<dbReference type="Pfam" id="PF06460">
    <property type="entry name" value="CoV_Methyltr_2"/>
    <property type="match status" value="1"/>
</dbReference>
<dbReference type="Pfam" id="PF09401">
    <property type="entry name" value="CoV_NSP10"/>
    <property type="match status" value="1"/>
</dbReference>
<dbReference type="Pfam" id="PF20631">
    <property type="entry name" value="CoV_NSP13_1B"/>
    <property type="match status" value="1"/>
</dbReference>
<dbReference type="Pfam" id="PF20633">
    <property type="entry name" value="CoV_NSP13_stalk"/>
    <property type="match status" value="1"/>
</dbReference>
<dbReference type="Pfam" id="PF20632">
    <property type="entry name" value="CoV_NSP13_ZBD"/>
    <property type="match status" value="1"/>
</dbReference>
<dbReference type="Pfam" id="PF19215">
    <property type="entry name" value="CoV_NSP15_C"/>
    <property type="match status" value="1"/>
</dbReference>
<dbReference type="Pfam" id="PF19216">
    <property type="entry name" value="CoV_NSP15_M"/>
    <property type="match status" value="1"/>
</dbReference>
<dbReference type="Pfam" id="PF19219">
    <property type="entry name" value="CoV_NSP15_N"/>
    <property type="match status" value="1"/>
</dbReference>
<dbReference type="Pfam" id="PF19212">
    <property type="entry name" value="CoV_NSP2_C"/>
    <property type="match status" value="1"/>
</dbReference>
<dbReference type="Pfam" id="PF19211">
    <property type="entry name" value="CoV_NSP2_N"/>
    <property type="match status" value="1"/>
</dbReference>
<dbReference type="Pfam" id="PF19218">
    <property type="entry name" value="CoV_NSP3_C"/>
    <property type="match status" value="1"/>
</dbReference>
<dbReference type="Pfam" id="PF16348">
    <property type="entry name" value="CoV_NSP4_C"/>
    <property type="match status" value="1"/>
</dbReference>
<dbReference type="Pfam" id="PF19217">
    <property type="entry name" value="CoV_NSP4_N"/>
    <property type="match status" value="1"/>
</dbReference>
<dbReference type="Pfam" id="PF19213">
    <property type="entry name" value="CoV_NSP6"/>
    <property type="match status" value="1"/>
</dbReference>
<dbReference type="Pfam" id="PF08716">
    <property type="entry name" value="CoV_NSP7"/>
    <property type="match status" value="1"/>
</dbReference>
<dbReference type="Pfam" id="PF08717">
    <property type="entry name" value="CoV_NSP8"/>
    <property type="match status" value="1"/>
</dbReference>
<dbReference type="Pfam" id="PF08710">
    <property type="entry name" value="CoV_NSP9"/>
    <property type="match status" value="1"/>
</dbReference>
<dbReference type="Pfam" id="PF08715">
    <property type="entry name" value="CoV_peptidase"/>
    <property type="match status" value="1"/>
</dbReference>
<dbReference type="Pfam" id="PF06478">
    <property type="entry name" value="CoV_RPol_N"/>
    <property type="match status" value="1"/>
</dbReference>
<dbReference type="Pfam" id="PF01661">
    <property type="entry name" value="Macro"/>
    <property type="match status" value="1"/>
</dbReference>
<dbReference type="Pfam" id="PF05409">
    <property type="entry name" value="Peptidase_C30"/>
    <property type="match status" value="1"/>
</dbReference>
<dbReference type="Pfam" id="PF00680">
    <property type="entry name" value="RdRP_1"/>
    <property type="match status" value="1"/>
</dbReference>
<dbReference type="SMART" id="SM00506">
    <property type="entry name" value="A1pp"/>
    <property type="match status" value="1"/>
</dbReference>
<dbReference type="SUPFAM" id="SSF144246">
    <property type="entry name" value="Coronavirus NSP10-like"/>
    <property type="match status" value="1"/>
</dbReference>
<dbReference type="SUPFAM" id="SSF140367">
    <property type="entry name" value="Coronavirus NSP7-like"/>
    <property type="match status" value="1"/>
</dbReference>
<dbReference type="SUPFAM" id="SSF143076">
    <property type="entry name" value="Coronavirus NSP8-like"/>
    <property type="match status" value="1"/>
</dbReference>
<dbReference type="SUPFAM" id="SSF56672">
    <property type="entry name" value="DNA/RNA polymerases"/>
    <property type="match status" value="1"/>
</dbReference>
<dbReference type="SUPFAM" id="SSF142877">
    <property type="entry name" value="EndoU-like"/>
    <property type="match status" value="1"/>
</dbReference>
<dbReference type="SUPFAM" id="SSF52949">
    <property type="entry name" value="Macro domain-like"/>
    <property type="match status" value="1"/>
</dbReference>
<dbReference type="SUPFAM" id="SSF159936">
    <property type="entry name" value="NSP3A-like"/>
    <property type="match status" value="1"/>
</dbReference>
<dbReference type="SUPFAM" id="SSF52540">
    <property type="entry name" value="P-loop containing nucleoside triphosphate hydrolases"/>
    <property type="match status" value="1"/>
</dbReference>
<dbReference type="SUPFAM" id="SSF101816">
    <property type="entry name" value="Replicase NSP9"/>
    <property type="match status" value="1"/>
</dbReference>
<dbReference type="SUPFAM" id="SSF53335">
    <property type="entry name" value="S-adenosyl-L-methionine-dependent methyltransferases"/>
    <property type="match status" value="1"/>
</dbReference>
<dbReference type="SUPFAM" id="SSF50494">
    <property type="entry name" value="Trypsin-like serine proteases"/>
    <property type="match status" value="1"/>
</dbReference>
<dbReference type="PROSITE" id="PS51961">
    <property type="entry name" value="AV_NSP11N_COV_NSP15M"/>
    <property type="match status" value="1"/>
</dbReference>
<dbReference type="PROSITE" id="PS51963">
    <property type="entry name" value="BCOV_NSP1_C"/>
    <property type="match status" value="1"/>
</dbReference>
<dbReference type="PROSITE" id="PS51942">
    <property type="entry name" value="BCOV_NSP3C_C"/>
    <property type="match status" value="1"/>
</dbReference>
<dbReference type="PROSITE" id="PS51941">
    <property type="entry name" value="BCOV_NSP3C_M"/>
    <property type="match status" value="1"/>
</dbReference>
<dbReference type="PROSITE" id="PS51994">
    <property type="entry name" value="BCOV_NSP3E_G2M"/>
    <property type="match status" value="1"/>
</dbReference>
<dbReference type="PROSITE" id="PS51945">
    <property type="entry name" value="BCOV_NSP3E_NAB"/>
    <property type="match status" value="1"/>
</dbReference>
<dbReference type="PROSITE" id="PS51993">
    <property type="entry name" value="COV_3ECTO"/>
    <property type="match status" value="1"/>
</dbReference>
<dbReference type="PROSITE" id="PS51952">
    <property type="entry name" value="COV_EXON_MTASE_COACT"/>
    <property type="match status" value="1"/>
</dbReference>
<dbReference type="PROSITE" id="PS51954">
    <property type="entry name" value="COV_N7_MTASE"/>
    <property type="match status" value="1"/>
</dbReference>
<dbReference type="PROSITE" id="PS51962">
    <property type="entry name" value="COV_NSP1"/>
    <property type="match status" value="1"/>
</dbReference>
<dbReference type="PROSITE" id="PS52000">
    <property type="entry name" value="COV_NSP12_IF"/>
    <property type="match status" value="1"/>
</dbReference>
<dbReference type="PROSITE" id="PS51948">
    <property type="entry name" value="COV_NSP12_RDRP"/>
    <property type="match status" value="1"/>
</dbReference>
<dbReference type="PROSITE" id="PS51960">
    <property type="entry name" value="COV_NSP15_NTD"/>
    <property type="match status" value="1"/>
</dbReference>
<dbReference type="PROSITE" id="PS51991">
    <property type="entry name" value="COV_NSP2_C"/>
    <property type="match status" value="1"/>
</dbReference>
<dbReference type="PROSITE" id="PS51990">
    <property type="entry name" value="COV_NSP2_M"/>
    <property type="match status" value="1"/>
</dbReference>
<dbReference type="PROSITE" id="PS51989">
    <property type="entry name" value="COV_NSP2_N"/>
    <property type="match status" value="1"/>
</dbReference>
<dbReference type="PROSITE" id="PS51992">
    <property type="entry name" value="COV_NSP3_Y"/>
    <property type="match status" value="1"/>
</dbReference>
<dbReference type="PROSITE" id="PS51943">
    <property type="entry name" value="COV_NSP3A_UBL"/>
    <property type="match status" value="1"/>
</dbReference>
<dbReference type="PROSITE" id="PS51944">
    <property type="entry name" value="COV_NSP3D_UBL"/>
    <property type="match status" value="1"/>
</dbReference>
<dbReference type="PROSITE" id="PS51946">
    <property type="entry name" value="COV_NSP4C"/>
    <property type="match status" value="1"/>
</dbReference>
<dbReference type="PROSITE" id="PS51949">
    <property type="entry name" value="COV_NSP7"/>
    <property type="match status" value="1"/>
</dbReference>
<dbReference type="PROSITE" id="PS51950">
    <property type="entry name" value="COV_NSP8"/>
    <property type="match status" value="1"/>
</dbReference>
<dbReference type="PROSITE" id="PS51951">
    <property type="entry name" value="COV_NSP9_SSRNA_BD"/>
    <property type="match status" value="1"/>
</dbReference>
<dbReference type="PROSITE" id="PS51653">
    <property type="entry name" value="CV_ZBD"/>
    <property type="match status" value="1"/>
</dbReference>
<dbReference type="PROSITE" id="PS51442">
    <property type="entry name" value="M_PRO"/>
    <property type="match status" value="1"/>
</dbReference>
<dbReference type="PROSITE" id="PS51154">
    <property type="entry name" value="MACRO"/>
    <property type="match status" value="1"/>
</dbReference>
<dbReference type="PROSITE" id="PS51958">
    <property type="entry name" value="NENDOU"/>
    <property type="match status" value="1"/>
</dbReference>
<dbReference type="PROSITE" id="PS51947">
    <property type="entry name" value="NIRAN"/>
    <property type="match status" value="1"/>
</dbReference>
<dbReference type="PROSITE" id="PS51955">
    <property type="entry name" value="NIV_2_O_MTASE"/>
    <property type="match status" value="1"/>
</dbReference>
<dbReference type="PROSITE" id="PS51953">
    <property type="entry name" value="NIV_EXON"/>
    <property type="match status" value="1"/>
</dbReference>
<dbReference type="PROSITE" id="PS51124">
    <property type="entry name" value="PEPTIDASE_C16"/>
    <property type="match status" value="1"/>
</dbReference>
<dbReference type="PROSITE" id="PS51657">
    <property type="entry name" value="PSRV_HELICASE"/>
    <property type="match status" value="1"/>
</dbReference>
<dbReference type="PROSITE" id="PS50507">
    <property type="entry name" value="RDRP_SSRNA_POS"/>
    <property type="match status" value="1"/>
</dbReference>
<organismHost>
    <name type="scientific">Camelus dromedarius</name>
    <name type="common">Dromedary</name>
    <name type="synonym">Arabian camel</name>
    <dbReference type="NCBI Taxonomy" id="9838"/>
</organismHost>
<organismHost>
    <name type="scientific">Homo sapiens</name>
    <name type="common">Human</name>
    <dbReference type="NCBI Taxonomy" id="9606"/>
</organismHost>
<accession>K9N7C7</accession>
<comment type="function">
    <text evidence="2">The replicase polyprotein of coronaviruses is a multifunctional protein: it contains the activities necessary for the transcription of negative stranded RNA, leader RNA, subgenomic mRNAs and progeny virion RNA as well as proteinases responsible for the cleavage of the polyprotein into functional products.</text>
</comment>
<comment type="function">
    <molecule>Host translation inhibitor nsp1</molecule>
    <text evidence="36">Promotes the degradation of host mRNAs by inducing an endonucleolytic RNA cleavage in template mRNAs, and inhibits of host mRNA translation, a function that is separable from its RNA cleavage activity. By suppressing host gene expression, nsp1 facilitates efficient viral gene expression in infected cells and evasion from host immune response.</text>
</comment>
<comment type="function">
    <molecule>Non-structural protein 2</molecule>
    <text evidence="2">May play a role in the modulation of host cell survival signaling pathway by interacting with host PHB and PHB2. Indeed, these two proteins play a role in maintaining the functional integrity of the mitochondria and protecting cells from various stresses.</text>
</comment>
<comment type="function">
    <molecule>Papain-like proteinase nsp3</molecule>
    <text evidence="2 35">Responsible for the cleavages located at the N-terminus of the replicase polyprotein. In addition, PL-PRO possesses a deubiquitinating/deISGylating activity and processes both 'Lys-48'- and 'Lys-63'-linked polyubiquitin chains from cellular substrates. Participates, together with nsp4, in the assembly of virally induced cytoplasmic double-membrane vesicles necessary for viral replication. Antagonizes innate immune induction of type I interferon by blocking the phosphorylation, dimerization and subsequent nuclear translocation of host IRF3. Also prevents host NF-kappa-B. signaling.</text>
</comment>
<comment type="function">
    <molecule>Non-structural protein 4</molecule>
    <text evidence="2">Participates in the assembly of virally-induced cytoplasmic double-membrane vesicles necessary for viral replication.</text>
</comment>
<comment type="function">
    <molecule>3C-like proteinase nsp5</molecule>
    <text evidence="2 9 37">Cleaves the C-terminus of replicase polyprotein at 11 sites. Recognizes substrates containing the core sequence [ILMVF]-Q-|-[SGACN] (By similarity). May cleave human NLRP1 in lung epithelial cells, thereby activating the NLRP1 inflammasome pathway (PubMed:35594856). Also able to bind an ADP-ribose-1''-phosphate (ADRP) (By similarity).</text>
</comment>
<comment type="function">
    <molecule>Non-structural protein 6</molecule>
    <text evidence="2">Plays a role in the initial induction of autophagosomes from host endoplasmic reticulum. Later, limits the expansion of these phagosomes that are no longer able to deliver viral components to lysosomes.</text>
</comment>
<comment type="function">
    <molecule>Non-structural protein 7</molecule>
    <text evidence="2">Forms a hexadecamer with nsp8 (8 subunits of each) that may participate in viral replication by acting as a primase. Alternatively, may synthesize substantially longer products than oligonucleotide primers.</text>
</comment>
<comment type="function">
    <molecule>Non-structural protein 8</molecule>
    <text evidence="2">Forms a hexadecamer with nsp7 (8 subunits of each) that may participate in viral replication by acting as a primase. Alternatively, may synthesize substantially longer products than oligonucleotide primers.</text>
</comment>
<comment type="function">
    <molecule>Viral protein genome-linked nsp9</molecule>
    <text evidence="3">Forms a primer, NSP9-pU, which is utilized by the polymerase for the initiation of RNA chains. Interacts with ribosome signal recognition particle RNA (SRP). Together with NSP8, suppress protein integration into the cell membrane, thereby disrupting host immune defenses.</text>
</comment>
<comment type="function">
    <molecule>Non-structural protein 10</molecule>
    <text evidence="2">Plays a pivotal role in viral transcription by stimulating both nsp14 3'-5' exoribonuclease and nsp16 2'-O-methyltransferase activities. Therefore plays an essential role in viral mRNAs cap methylation.</text>
</comment>
<comment type="function">
    <molecule>RNA-directed RNA polymerase nsp12</molecule>
    <text evidence="3">RNA-directed RNA polymerase that catalyzes the transcription of viral genomic and subgenomic RNAs. Acts in complex with nsp7 and nsp8 to transcribe both the minus and positive strands of genomic RNA. The kinase-like NiRAN domain of NSP12 attaches one or more nucleotides to the amino terminus of NSP9, forming a covalent RNA-protein intermediate that serves as transcription/replication primer. Subgenomic RNAs (sgRNAs) are formed by discontinuous transcription: The polymerase has the ability to pause at transcription-regulating sequences (TRS) and jump to the leader TRS, resulting in a major deletion. This creates a series of subgenomic RNAs that are replicated, transcribed and translated. In addition, Nsp12 is a subunit of the viral RNA capping enzyme that catalyzes the RNA guanylyltransferase reaction for genomic and sub-genomic RNAs. Subsequently, the NiRAN domain transfers RNA to GDP, and forms the core cap structure GpppA-RNA.</text>
</comment>
<comment type="function">
    <molecule>Helicase nsp13</molecule>
    <text evidence="2">Multi-functional protein with a zinc-binding domain in N-terminus displaying RNA and DNA duplex-unwinding activities with 5' to 3' polarity. Activity of helicase is dependent on magnesium.</text>
</comment>
<comment type="function">
    <molecule>Guanine-N7 methyltransferase nsp14</molecule>
    <text evidence="2">Plays a role in viral RNA synthesis through two distinct activities: an N7-guanine methyltransferase activity involved in the formation of the cap structure GpppA-RNA; a proofreading exoribonuclease for RNA replication that reduces the sensitivity of the virus to RNA mutagens. This activity acts on both ssRNA and dsRNA in a 3'-5' direction.</text>
</comment>
<comment type="function">
    <molecule>Uridylate-specific endoribonuclease nsp15</molecule>
    <text evidence="2">Plays a role in viral transcription/replication and prevents the simultaneous activation of host cell dsRNA sensors, such as MDA5/IFIH1, OAS, and PKR (By similarity). Acts by degrading the 5'-polyuridines generated during replication of the poly(A) region of viral genomic and subgenomic RNAs. Catalyzes a two-step reaction in which a 2'3'-cyclic phosphate (2'3'-cP) is first generated by 2'-O transesterification, which is then hydrolyzed to a 3'-phosphate (3'-P) (By similarity). If not degraded, poly(U) RNA would hybridize with poly(A) RNA tails and activate host dsRNA sensors (By similarity).</text>
</comment>
<comment type="function">
    <molecule>2'-O-methyltransferase nsp16</molecule>
    <text evidence="2">Methyltransferase that mediates mRNA cap 2'-O-ribose methylation to the 5'-cap structure of viral mRNAs. N7-methyl guanosine cap is a prerequisite for binding of nsp16. Therefore plays an essential role in viral mRNAs cap methylation which is essential to evade immune system.</text>
</comment>
<comment type="catalytic activity">
    <molecule>RNA-directed RNA polymerase nsp12</molecule>
    <reaction evidence="8">
        <text>RNA(n) + a ribonucleoside 5'-triphosphate = RNA(n+1) + diphosphate</text>
        <dbReference type="Rhea" id="RHEA:21248"/>
        <dbReference type="Rhea" id="RHEA-COMP:14527"/>
        <dbReference type="Rhea" id="RHEA-COMP:17342"/>
        <dbReference type="ChEBI" id="CHEBI:33019"/>
        <dbReference type="ChEBI" id="CHEBI:61557"/>
        <dbReference type="ChEBI" id="CHEBI:140395"/>
        <dbReference type="EC" id="2.7.7.48"/>
    </reaction>
</comment>
<comment type="catalytic activity">
    <molecule>Helicase nsp13</molecule>
    <reaction>
        <text>ATP + H2O = ADP + phosphate + H(+)</text>
        <dbReference type="Rhea" id="RHEA:13065"/>
        <dbReference type="ChEBI" id="CHEBI:15377"/>
        <dbReference type="ChEBI" id="CHEBI:15378"/>
        <dbReference type="ChEBI" id="CHEBI:30616"/>
        <dbReference type="ChEBI" id="CHEBI:43474"/>
        <dbReference type="ChEBI" id="CHEBI:456216"/>
        <dbReference type="EC" id="3.6.4.12"/>
    </reaction>
</comment>
<comment type="catalytic activity">
    <molecule>Helicase nsp13</molecule>
    <reaction>
        <text>ATP + H2O = ADP + phosphate + H(+)</text>
        <dbReference type="Rhea" id="RHEA:13065"/>
        <dbReference type="ChEBI" id="CHEBI:15377"/>
        <dbReference type="ChEBI" id="CHEBI:15378"/>
        <dbReference type="ChEBI" id="CHEBI:30616"/>
        <dbReference type="ChEBI" id="CHEBI:43474"/>
        <dbReference type="ChEBI" id="CHEBI:456216"/>
        <dbReference type="EC" id="3.6.4.13"/>
    </reaction>
</comment>
<comment type="catalytic activity">
    <molecule>Papain-like proteinase nsp3</molecule>
    <reaction>
        <text>Thiol-dependent hydrolysis of ester, thioester, amide, peptide and isopeptide bonds formed by the C-terminal Gly of ubiquitin (a 76-residue protein attached to proteins as an intracellular targeting signal).</text>
        <dbReference type="EC" id="3.4.19.12"/>
    </reaction>
</comment>
<comment type="catalytic activity">
    <molecule>2'-O-methyltransferase nsp16</molecule>
    <reaction evidence="2">
        <text>a 5'-end (N(7)-methyl 5'-triphosphoguanosine)-ribonucleoside in mRNA + S-adenosyl-L-methionine = a 5'-end (N(7)-methyl 5'-triphosphoguanosine)-(2'-O-methyl-ribonucleoside) in mRNA + S-adenosyl-L-homocysteine + H(+)</text>
        <dbReference type="Rhea" id="RHEA:67020"/>
        <dbReference type="Rhea" id="RHEA-COMP:17167"/>
        <dbReference type="Rhea" id="RHEA-COMP:17168"/>
        <dbReference type="ChEBI" id="CHEBI:15378"/>
        <dbReference type="ChEBI" id="CHEBI:57856"/>
        <dbReference type="ChEBI" id="CHEBI:59789"/>
        <dbReference type="ChEBI" id="CHEBI:156461"/>
        <dbReference type="ChEBI" id="CHEBI:167609"/>
        <dbReference type="EC" id="2.1.1.57"/>
    </reaction>
</comment>
<comment type="catalytic activity">
    <molecule>Uridylate-specific endoribonuclease nsp15</molecule>
    <reaction evidence="2">
        <text>uridylyl-uridylyl-ribonucleotide-RNA = a 3'-end uridylyl-2',3'-cyclophospho-uridine-RNA + a 5'-end dephospho-ribonucleoside-RNA</text>
        <dbReference type="Rhea" id="RHEA:67732"/>
        <dbReference type="Rhea" id="RHEA-COMP:13936"/>
        <dbReference type="Rhea" id="RHEA-COMP:17334"/>
        <dbReference type="Rhea" id="RHEA-COMP:17335"/>
        <dbReference type="ChEBI" id="CHEBI:138284"/>
        <dbReference type="ChEBI" id="CHEBI:173079"/>
        <dbReference type="ChEBI" id="CHEBI:173080"/>
    </reaction>
</comment>
<comment type="catalytic activity">
    <molecule>RNA-directed RNA polymerase nsp12</molecule>
    <reaction evidence="3">
        <text>a 5'-end diphospho-ribonucleoside in mRNA + GTP + H(+) = a 5'-end (5'-triphosphoguanosine)-ribonucleoside in mRNA + diphosphate</text>
        <dbReference type="Rhea" id="RHEA:67012"/>
        <dbReference type="Rhea" id="RHEA-COMP:17165"/>
        <dbReference type="Rhea" id="RHEA-COMP:17166"/>
        <dbReference type="ChEBI" id="CHEBI:15378"/>
        <dbReference type="ChEBI" id="CHEBI:33019"/>
        <dbReference type="ChEBI" id="CHEBI:37565"/>
        <dbReference type="ChEBI" id="CHEBI:167616"/>
        <dbReference type="ChEBI" id="CHEBI:167617"/>
        <dbReference type="EC" id="2.7.7.50"/>
    </reaction>
    <physiologicalReaction direction="left-to-right" evidence="3">
        <dbReference type="Rhea" id="RHEA:67013"/>
    </physiologicalReaction>
</comment>
<comment type="catalytic activity">
    <molecule>Guanine-N7 methyltransferase nsp14</molecule>
    <reaction evidence="2">
        <text>a 5'-end (5'-triphosphoguanosine)-ribonucleoside in mRNA + S-adenosyl-L-methionine = a 5'-end (N(7)-methyl 5'-triphosphoguanosine)-ribonucleoside in mRNA + S-adenosyl-L-homocysteine</text>
        <dbReference type="Rhea" id="RHEA:67008"/>
        <dbReference type="Rhea" id="RHEA-COMP:17166"/>
        <dbReference type="Rhea" id="RHEA-COMP:17167"/>
        <dbReference type="ChEBI" id="CHEBI:57856"/>
        <dbReference type="ChEBI" id="CHEBI:59789"/>
        <dbReference type="ChEBI" id="CHEBI:156461"/>
        <dbReference type="ChEBI" id="CHEBI:167617"/>
        <dbReference type="EC" id="2.1.1.56"/>
    </reaction>
    <physiologicalReaction direction="left-to-right" evidence="2">
        <dbReference type="Rhea" id="RHEA:67009"/>
    </physiologicalReaction>
</comment>
<comment type="cofactor">
    <molecule>Uridylate-specific endoribonuclease nsp15</molecule>
    <cofactor evidence="2">
        <name>Mn(2+)</name>
        <dbReference type="ChEBI" id="CHEBI:29035"/>
    </cofactor>
    <text evidence="2">Likely affects Nsp15 binding to RNA.</text>
</comment>
<comment type="cofactor">
    <molecule>RNA-directed RNA polymerase nsp12</molecule>
    <cofactor evidence="3">
        <name>Mg(2+)</name>
        <dbReference type="ChEBI" id="CHEBI:18420"/>
    </cofactor>
</comment>
<comment type="subunit">
    <molecule>Non-structural protein 2</molecule>
    <text evidence="2">Interacts with host PHB and PHB2.</text>
</comment>
<comment type="subunit">
    <molecule>Non-structural protein 4</molecule>
    <text evidence="2">Interacts with papain-like protease nsp3 and non-structural protein 6.</text>
</comment>
<comment type="subunit">
    <molecule>3C-like proteinase nsp5</molecule>
    <text evidence="2">Monomer. Homodimer. Only the homodimer shows catalytic activity.</text>
</comment>
<comment type="subunit">
    <molecule>Non-structural protein 7</molecule>
    <text evidence="3">Interacts with nsp8 and nsp12 to form the replication-transcription complex (RTC): nsp12, nsp7, two subunits of nsp8, and up to two subunits of nsp13.</text>
</comment>
<comment type="subunit">
    <molecule>Non-structural protein 8</molecule>
    <text evidence="3">Interacts with nsp7, nsp13 and nsp12 to form the replication-transcription complex (RTC): nsp12, nsp7, two subunits of nsp8, and up to two subunits of nsp13.</text>
</comment>
<comment type="subunit">
    <molecule>Viral protein genome-linked nsp9</molecule>
    <text evidence="3">Interacts with nsp12.</text>
</comment>
<comment type="subunit">
    <molecule>Non-structural protein 10</molecule>
    <text evidence="3">Interacts with proofreading exoribonuclease nsp14 and 2'-O-methyltransferase nsp16; these interactions enhance nsp14 and nsp16 enzymatic activities.</text>
</comment>
<comment type="subunit">
    <molecule>RNA-directed RNA polymerase nsp12</molecule>
    <text evidence="3">Interacts with nsp7 and nsp8 to form the replication-transcription complex (RTC): nsp12, nsp7, two subunits of nsp8, and up to two subunits of nsp13. Interacts with nsp9.</text>
</comment>
<comment type="subunit">
    <molecule>Helicase nsp13</molecule>
    <text evidence="3">Interacts with nsp8 to form the replication-transcription complex (RTC): nsp12, nsp7, two subunits of nsp8, and up to two subunits of nsp13.</text>
</comment>
<comment type="interaction">
    <interactant intactId="EBI-25592237">
        <id>PRO_0000422441</id>
    </interactant>
    <interactant intactId="EBI-746466">
        <id>P05161</id>
        <label>ISG15</label>
    </interactant>
    <organismsDiffer>true</organismsDiffer>
    <experiments>4</experiments>
</comment>
<comment type="interaction">
    <interactant intactId="EBI-25592237">
        <id>PRO_0000422441</id>
    </interactant>
    <interactant intactId="EBI-947779">
        <id>Q96PM5</id>
        <label>RCHY1</label>
    </interactant>
    <organismsDiffer>true</organismsDiffer>
    <experiments>2</experiments>
</comment>
<comment type="interaction">
    <interactant intactId="EBI-25592093">
        <id>PRO_0000422452</id>
    </interactant>
    <interactant intactId="EBI-25592080">
        <id>PRO_0000422446</id>
        <label>rep</label>
        <dbReference type="UniProtKB" id="K9N7C7"/>
    </interactant>
    <organismsDiffer>false</organismsDiffer>
    <experiments>2</experiments>
</comment>
<comment type="interaction">
    <interactant intactId="EBI-25592093">
        <id>PRO_0000422452</id>
    </interactant>
    <interactant intactId="EBI-25592093">
        <id>PRO_0000422452</id>
        <label>rep</label>
        <dbReference type="UniProtKB" id="K9N7C7"/>
    </interactant>
    <organismsDiffer>false</organismsDiffer>
    <experiments>2</experiments>
</comment>
<comment type="subcellular location">
    <molecule>Papain-like proteinase nsp3</molecule>
    <subcellularLocation>
        <location>Host membrane</location>
        <topology>Multi-pass membrane protein</topology>
    </subcellularLocation>
    <subcellularLocation>
        <location evidence="2">Host cytoplasm</location>
    </subcellularLocation>
</comment>
<comment type="subcellular location">
    <molecule>Non-structural protein 4</molecule>
    <subcellularLocation>
        <location>Host membrane</location>
        <topology>Multi-pass membrane protein</topology>
    </subcellularLocation>
    <subcellularLocation>
        <location>Host cytoplasm</location>
    </subcellularLocation>
    <text evidence="2">Localizes in virally-induced cytoplasmic double-membrane vesicles.</text>
</comment>
<comment type="subcellular location">
    <molecule>Non-structural protein 6</molecule>
    <subcellularLocation>
        <location evidence="38">Host membrane</location>
        <topology evidence="38">Multi-pass membrane protein</topology>
    </subcellularLocation>
</comment>
<comment type="subcellular location">
    <molecule>Non-structural protein 7</molecule>
    <subcellularLocation>
        <location evidence="1">Host cytoplasm</location>
        <location evidence="1">Host perinuclear region</location>
    </subcellularLocation>
    <text evidence="1">nsp7, nsp8, nsp9 and nsp10 are localized in cytoplasmic foci, largely perinuclear. Late in infection, they merge into confluent complexes (By similarity).</text>
</comment>
<comment type="subcellular location">
    <molecule>Non-structural protein 8</molecule>
    <subcellularLocation>
        <location evidence="1">Host cytoplasm</location>
        <location evidence="1">Host perinuclear region</location>
    </subcellularLocation>
    <text evidence="1">nsp7, nsp8, nsp9 and nsp10 are localized in cytoplasmic foci, largely perinuclear. Late in infection, they merge into confluent complexes (By similarity).</text>
</comment>
<comment type="subcellular location">
    <molecule>Viral protein genome-linked nsp9</molecule>
    <subcellularLocation>
        <location evidence="1">Host cytoplasm</location>
        <location evidence="1">Host perinuclear region</location>
    </subcellularLocation>
    <text evidence="1">nsp7, nsp8, nsp9 and nsp10 are localized in cytoplasmic foci, largely perinuclear. Late in infection, they merge into confluent complexes (By similarity).</text>
</comment>
<comment type="subcellular location">
    <molecule>Non-structural protein 10</molecule>
    <subcellularLocation>
        <location evidence="1">Host cytoplasm</location>
        <location evidence="1">Host perinuclear region</location>
    </subcellularLocation>
    <text evidence="1">nsp7, nsp8, nsp9 and nsp10 are localized in cytoplasmic foci, largely perinuclear. Late in infection, they merge into confluent complexes (By similarity).</text>
</comment>
<comment type="subcellular location">
    <molecule>Helicase nsp13</molecule>
    <subcellularLocation>
        <location evidence="38">Host endoplasmic reticulum-Golgi intermediate compartment</location>
    </subcellularLocation>
    <text evidence="1">The helicase interacts with the N protein in membranous complexes and colocalizes with sites of synthesis of new viral RNA.</text>
</comment>
<comment type="subcellular location">
    <molecule>Uridylate-specific endoribonuclease nsp15</molecule>
    <subcellularLocation>
        <location evidence="1">Host cytoplasm</location>
        <location evidence="1">Host perinuclear region</location>
    </subcellularLocation>
</comment>
<comment type="alternative products">
    <event type="ribosomal frameshifting"/>
    <isoform>
        <id>K9N7C7-1</id>
        <name>Replicase polyprotein 1ab</name>
        <name>pp1ab</name>
        <sequence type="displayed"/>
    </isoform>
    <isoform>
        <id>K9N638-1</id>
        <name>Replicase polyprotein 1a</name>
        <name>pp1a</name>
        <name>ORF1a polyprotein</name>
        <sequence type="external"/>
    </isoform>
</comment>
<comment type="domain">
    <text>The hydrophobic domains (HD) could mediate the membrane association of the replication complex and thereby alter the architecture of the host cell membrane.</text>
</comment>
<comment type="PTM">
    <text evidence="1">Specific enzymatic cleavages in vivo by its own proteases yield mature proteins. 3CL-PRO and PL-PRO proteinases are autocatalytically processed (By similarity).</text>
</comment>
<comment type="miscellaneous">
    <molecule>Isoform Replicase polyprotein 1ab</molecule>
    <text>Produced by -1 ribosomal frameshifting at the 1a-1b genes boundary.</text>
</comment>
<comment type="similarity">
    <text evidence="38">Belongs to the coronaviruses polyprotein 1ab family.</text>
</comment>
<reference key="1">
    <citation type="journal article" date="2012" name="Eurosurveillance">
        <title>Severe respiratory illness caused by a novel coronavirus, in a patient transferred to the United Kingdom from the Middle East, September 2012.</title>
        <authorList>
            <person name="Bermingham A."/>
            <person name="Chand M.A."/>
            <person name="Brown C.S."/>
            <person name="Aarons E."/>
            <person name="Tong C."/>
            <person name="Langrish C."/>
            <person name="Hoschler K."/>
            <person name="Brown K."/>
            <person name="Galiano M."/>
            <person name="Myers R."/>
            <person name="Pebody R.G."/>
            <person name="Green H.K."/>
            <person name="Boddington N.L."/>
            <person name="Gopal R."/>
            <person name="Price N."/>
            <person name="Newsholme W."/>
            <person name="Drosten C."/>
            <person name="Fouchier R.A."/>
            <person name="Zambon M."/>
        </authorList>
    </citation>
    <scope>NUCLEOTIDE SEQUENCE [GENOMIC RNA]</scope>
</reference>
<reference key="2">
    <citation type="journal article" date="2014" name="J. Virol.">
        <title>Catalytic function and substrate specificity of the papain-like protease domain of nsp3 from the Middle East respiratory syndrome coronavirus.</title>
        <authorList>
            <person name="Baez-Santos Y.M."/>
            <person name="Mielech A.M."/>
            <person name="Deng X."/>
            <person name="Baker S."/>
            <person name="Mesecar A.D."/>
        </authorList>
    </citation>
    <scope>FUNCTION (PAPAIN-LIKE PROTEINASE)</scope>
</reference>
<reference key="3">
    <citation type="journal article" date="2015" name="J. Virol.">
        <title>Middle east respiratory syndrome coronavirus nsp1 inhibits host gene expression by selectively targeting mRNAs transcribed in the nucleus while sparing mRNAs of cytoplasmic origin.</title>
        <authorList>
            <person name="Lokugamage K.G."/>
            <person name="Narayanan K."/>
            <person name="Nakagawa K."/>
            <person name="Terasaki K."/>
            <person name="Ramirez S.I."/>
            <person name="Tseng C.T."/>
            <person name="Makino S."/>
        </authorList>
    </citation>
    <scope>FUNCTION (NSP1)</scope>
</reference>
<reference key="4">
    <citation type="journal article" date="2022" name="Mol. Cell">
        <title>Human NLRP1 is a sensor of pathogenic coronavirus 3CL proteases in lung epithelial cells.</title>
        <authorList>
            <consortium name="COVID Human Genetic Effort"/>
            <person name="Planes R."/>
            <person name="Pinilla M."/>
            <person name="Santoni K."/>
            <person name="Hessel A."/>
            <person name="Passemar C."/>
            <person name="Lay K."/>
            <person name="Paillette P."/>
            <person name="Valadao A.C."/>
            <person name="Robinson K.S."/>
            <person name="Bastard P."/>
            <person name="Lam N."/>
            <person name="Fadrique R."/>
            <person name="Rossi I."/>
            <person name="Pericat D."/>
            <person name="Bagayoko S."/>
            <person name="Leon-Icaza S.A."/>
            <person name="Rombouts Y."/>
            <person name="Perouzel E."/>
            <person name="Tiraby M."/>
            <person name="Zhang Q."/>
            <person name="Cicuta P."/>
            <person name="Jouanguy E."/>
            <person name="Neyrolles O."/>
            <person name="Bryant C.E."/>
            <person name="Floto A.R."/>
            <person name="Goujon C."/>
            <person name="Lei F.Z."/>
            <person name="Martin-Blondel G."/>
            <person name="Silva S."/>
            <person name="Casanova J.L."/>
            <person name="Cougoule C."/>
            <person name="Reversade B."/>
            <person name="Marcoux J."/>
            <person name="Ravet E."/>
            <person name="Meunier E."/>
        </authorList>
    </citation>
    <scope>FUNCTION (3C-LIKE PROTEINASE NSP5)</scope>
</reference>
<keyword id="KW-0002">3D-structure</keyword>
<keyword id="KW-1072">Activation of host autophagy by virus</keyword>
<keyword id="KW-0067">ATP-binding</keyword>
<keyword id="KW-1132">Decay of host mRNAs by virus</keyword>
<keyword id="KW-1015">Disulfide bond</keyword>
<keyword id="KW-0255">Endonuclease</keyword>
<keyword id="KW-1262">Eukaryotic host gene expression shutoff by virus</keyword>
<keyword id="KW-1193">Eukaryotic host translation shutoff by virus</keyword>
<keyword id="KW-0269">Exonuclease</keyword>
<keyword id="KW-0347">Helicase</keyword>
<keyword id="KW-1035">Host cytoplasm</keyword>
<keyword id="KW-1190">Host gene expression shutoff by virus</keyword>
<keyword id="KW-1043">Host membrane</keyword>
<keyword id="KW-1192">Host mRNA suppression by virus</keyword>
<keyword id="KW-0945">Host-virus interaction</keyword>
<keyword id="KW-0378">Hydrolase</keyword>
<keyword id="KW-1090">Inhibition of host innate immune response by virus</keyword>
<keyword id="KW-1114">Inhibition of host interferon signaling pathway by virus</keyword>
<keyword id="KW-1095">Inhibition of host ISG15 by virus</keyword>
<keyword id="KW-1100">Inhibition of host NF-kappa-B by virus</keyword>
<keyword id="KW-0922">Interferon antiviral system evasion</keyword>
<keyword id="KW-0456">Lyase</keyword>
<keyword id="KW-0464">Manganese</keyword>
<keyword id="KW-0472">Membrane</keyword>
<keyword id="KW-0479">Metal-binding</keyword>
<keyword id="KW-0489">Methyltransferase</keyword>
<keyword id="KW-1127">Modulation of host ubiquitin pathway by viral deubiquitinase</keyword>
<keyword id="KW-1130">Modulation of host ubiquitin pathway by virus</keyword>
<keyword id="KW-0540">Nuclease</keyword>
<keyword id="KW-0547">Nucleotide-binding</keyword>
<keyword id="KW-0548">Nucleotidyltransferase</keyword>
<keyword id="KW-0645">Protease</keyword>
<keyword id="KW-1185">Reference proteome</keyword>
<keyword id="KW-0677">Repeat</keyword>
<keyword id="KW-0688">Ribosomal frameshifting</keyword>
<keyword id="KW-0694">RNA-binding</keyword>
<keyword id="KW-0696">RNA-directed RNA polymerase</keyword>
<keyword id="KW-0788">Thiol protease</keyword>
<keyword id="KW-0808">Transferase</keyword>
<keyword id="KW-0812">Transmembrane</keyword>
<keyword id="KW-1133">Transmembrane helix</keyword>
<keyword id="KW-0833">Ubl conjugation pathway</keyword>
<keyword id="KW-0899">Viral immunoevasion</keyword>
<keyword id="KW-0693">Viral RNA replication</keyword>
<keyword id="KW-0862">Zinc</keyword>
<keyword id="KW-0863">Zinc-finger</keyword>
<feature type="chain" id="PRO_0000422439" description="Host translation inhibitor nsp1" evidence="2">
    <location>
        <begin position="1"/>
        <end position="193"/>
    </location>
</feature>
<feature type="chain" id="PRO_0000422440" description="Non-structural protein 2" evidence="2">
    <location>
        <begin position="194"/>
        <end position="853"/>
    </location>
</feature>
<feature type="chain" id="PRO_0000422441" description="Papain-like proteinase nsp3" evidence="2">
    <location>
        <begin position="854"/>
        <end position="2740"/>
    </location>
</feature>
<feature type="chain" id="PRO_0000422442" description="Non-structural protein 4" evidence="2">
    <location>
        <begin position="2741"/>
        <end position="3247"/>
    </location>
</feature>
<feature type="chain" id="PRO_0000422443" description="3C-like proteinase nsp5" evidence="2">
    <location>
        <begin position="3248"/>
        <end position="3553"/>
    </location>
</feature>
<feature type="chain" id="PRO_0000422444" description="Non-structural protein 6" evidence="2">
    <location>
        <begin position="3554"/>
        <end position="3845"/>
    </location>
</feature>
<feature type="chain" id="PRO_0000422445" description="Non-structural protein 7" evidence="2">
    <location>
        <begin position="3846"/>
        <end position="3928"/>
    </location>
</feature>
<feature type="chain" id="PRO_0000422446" description="Non-structural protein 8" evidence="2">
    <location>
        <begin position="3929"/>
        <end position="4127"/>
    </location>
</feature>
<feature type="chain" id="PRO_0000422447" description="Viral protein genome-linked nsp9" evidence="2">
    <location>
        <begin position="4128"/>
        <end position="4237"/>
    </location>
</feature>
<feature type="chain" id="PRO_0000422448" description="Non-structural protein 10" evidence="2">
    <location>
        <begin position="4238"/>
        <end position="4377"/>
    </location>
</feature>
<feature type="chain" id="PRO_0000422449" description="RNA-directed RNA polymerase nsp12" evidence="2">
    <location>
        <begin position="4378"/>
        <end position="5310"/>
    </location>
</feature>
<feature type="chain" id="PRO_0000422450" description="Helicase nsp13" evidence="2">
    <location>
        <begin position="5311"/>
        <end position="5908"/>
    </location>
</feature>
<feature type="chain" id="PRO_0000422451" description="Guanine-N7 methyltransferase nsp14" evidence="1 2">
    <location>
        <begin position="5909"/>
        <end position="6432"/>
    </location>
</feature>
<feature type="chain" id="PRO_0000422452" description="Uridylate-specific endoribonuclease nsp15" evidence="2">
    <location>
        <begin position="6433"/>
        <end position="6775"/>
    </location>
</feature>
<feature type="chain" id="PRO_0000422453" description="2'-O-methyltransferase nsp16" evidence="2">
    <location>
        <begin position="6776"/>
        <end position="7078"/>
    </location>
</feature>
<feature type="transmembrane region" description="Helical" evidence="4">
    <location>
        <begin position="2105"/>
        <end position="2125"/>
    </location>
</feature>
<feature type="transmembrane region" description="Helical" evidence="4">
    <location>
        <begin position="2177"/>
        <end position="2197"/>
    </location>
</feature>
<feature type="transmembrane region" description="Helical" evidence="4">
    <location>
        <begin position="2281"/>
        <end position="2301"/>
    </location>
</feature>
<feature type="transmembrane region" description="Helical" evidence="4">
    <location>
        <begin position="2305"/>
        <end position="2325"/>
    </location>
</feature>
<feature type="transmembrane region" description="Helical" evidence="4">
    <location>
        <begin position="2330"/>
        <end position="2350"/>
    </location>
</feature>
<feature type="transmembrane region" description="Helical" evidence="4">
    <location>
        <begin position="2757"/>
        <end position="2777"/>
    </location>
</feature>
<feature type="transmembrane region" description="Helical" evidence="4">
    <location>
        <begin position="3028"/>
        <end position="3048"/>
    </location>
</feature>
<feature type="transmembrane region" description="Helical" evidence="4">
    <location>
        <begin position="3062"/>
        <end position="3082"/>
    </location>
</feature>
<feature type="transmembrane region" description="Helical" evidence="4">
    <location>
        <begin position="3104"/>
        <end position="3124"/>
    </location>
</feature>
<feature type="transmembrane region" description="Helical" evidence="4">
    <location>
        <begin position="3125"/>
        <end position="3145"/>
    </location>
</feature>
<feature type="transmembrane region" description="Helical" evidence="4">
    <location>
        <begin position="3559"/>
        <end position="3579"/>
    </location>
</feature>
<feature type="transmembrane region" description="Helical" evidence="4">
    <location>
        <begin position="3593"/>
        <end position="3613"/>
    </location>
</feature>
<feature type="transmembrane region" description="Helical" evidence="4">
    <location>
        <begin position="3618"/>
        <end position="3638"/>
    </location>
</feature>
<feature type="transmembrane region" description="Helical" evidence="4">
    <location>
        <begin position="3664"/>
        <end position="3684"/>
    </location>
</feature>
<feature type="transmembrane region" description="Helical" evidence="4">
    <location>
        <begin position="3691"/>
        <end position="3711"/>
    </location>
</feature>
<feature type="transmembrane region" description="Helical" evidence="4">
    <location>
        <begin position="3740"/>
        <end position="3760"/>
    </location>
</feature>
<feature type="transmembrane region" description="Helical" evidence="4">
    <location>
        <begin position="3765"/>
        <end position="3785"/>
    </location>
</feature>
<feature type="domain" description="CoV Nsp1 globular" evidence="26">
    <location>
        <begin position="25"/>
        <end position="149"/>
    </location>
</feature>
<feature type="domain" description="BetaCoV Nsp1 C-terminal" evidence="27">
    <location>
        <begin position="165"/>
        <end position="193"/>
    </location>
</feature>
<feature type="domain" description="CoV Nsp2 N-terminal" evidence="28">
    <location>
        <begin position="195"/>
        <end position="475"/>
    </location>
</feature>
<feature type="domain" description="CoV Nsp2 middle" evidence="29">
    <location>
        <begin position="481"/>
        <end position="715"/>
    </location>
</feature>
<feature type="domain" description="CoV Nsp2 C-terminal" evidence="30">
    <location>
        <begin position="717"/>
        <end position="853"/>
    </location>
</feature>
<feature type="domain" description="Ubiquitin-like 1" evidence="5">
    <location>
        <begin position="857"/>
        <end position="966"/>
    </location>
</feature>
<feature type="domain" description="Macro 1" evidence="7">
    <location>
        <begin position="1110"/>
        <end position="1276"/>
    </location>
</feature>
<feature type="domain" description="Macro 2" evidence="7">
    <location>
        <begin position="1278"/>
        <end position="1404"/>
    </location>
</feature>
<feature type="domain" description="DPUP" evidence="11">
    <location>
        <begin position="1404"/>
        <end position="1477"/>
    </location>
</feature>
<feature type="domain" description="Ubiquitin-like 2" evidence="5">
    <location>
        <begin position="1482"/>
        <end position="1537"/>
    </location>
</feature>
<feature type="domain" description="Peptidase C16" evidence="6">
    <location>
        <begin position="1552"/>
        <end position="1823"/>
    </location>
</feature>
<feature type="domain" description="Nucleic acid-binding" evidence="12">
    <location>
        <begin position="1837"/>
        <end position="1954"/>
    </location>
</feature>
<feature type="domain" description="G2M" evidence="33">
    <location>
        <begin position="1967"/>
        <end position="2088"/>
    </location>
</feature>
<feature type="domain" description="3Ecto" evidence="32">
    <location>
        <begin position="2214"/>
        <end position="2280"/>
    </location>
</feature>
<feature type="domain" description="CoV Nsp3 Y" evidence="31">
    <location>
        <begin position="2364"/>
        <end position="2737"/>
    </location>
</feature>
<feature type="domain" description="Nsp4C" evidence="13">
    <location>
        <begin position="3151"/>
        <end position="3247"/>
    </location>
</feature>
<feature type="domain" description="Peptidase C30" evidence="9">
    <location>
        <begin position="3248"/>
        <end position="3553"/>
    </location>
</feature>
<feature type="domain" description="RdRp Nsp7 cofactor" evidence="16">
    <location>
        <begin position="3846"/>
        <end position="3928"/>
    </location>
</feature>
<feature type="domain" description="RdRp Nsp8 cofactor" evidence="17">
    <location>
        <begin position="3929"/>
        <end position="4127"/>
    </location>
</feature>
<feature type="domain" description="Nsp9 ssRNA-binding" evidence="18">
    <location>
        <begin position="4128"/>
        <end position="4237"/>
    </location>
</feature>
<feature type="domain" description="ExoN/MTase coactivator" evidence="19">
    <location>
        <begin position="4238"/>
        <end position="4377"/>
    </location>
</feature>
<feature type="domain" description="NiRAN" evidence="14">
    <location>
        <begin position="4383"/>
        <end position="4639"/>
    </location>
</feature>
<feature type="domain" description="Nsp12 Interface" evidence="34">
    <location>
        <begin position="4644"/>
        <end position="4742"/>
    </location>
</feature>
<feature type="domain" description="Nsp12 RNA-dependent RNA polymerase" evidence="15">
    <location>
        <begin position="4743"/>
        <end position="5310"/>
    </location>
</feature>
<feature type="domain" description="RdRp catalytic" evidence="8">
    <location>
        <begin position="4990"/>
        <end position="5152"/>
    </location>
</feature>
<feature type="domain" description="CV ZBD" evidence="10">
    <location>
        <begin position="5311"/>
        <end position="5423"/>
    </location>
</feature>
<feature type="domain" description="ExoN" evidence="20">
    <location>
        <begin position="5980"/>
        <end position="6195"/>
    </location>
</feature>
<feature type="domain" description="N7-MTase" evidence="21">
    <location>
        <begin position="6204"/>
        <end position="6432"/>
    </location>
</feature>
<feature type="domain" description="Nsp15 N-terminal oligomerization" evidence="24">
    <location>
        <begin position="6433"/>
        <end position="6493"/>
    </location>
</feature>
<feature type="domain" description="AV-Nsp11N/CoV-Nsp15M" evidence="25">
    <location>
        <begin position="6494"/>
        <end position="6616"/>
    </location>
</feature>
<feature type="domain" description="NendoU" evidence="23">
    <location>
        <begin position="6633"/>
        <end position="6772"/>
    </location>
</feature>
<feature type="domain" description="Nidovirus-type SAM-dependent 2'-O-MTase" evidence="22">
    <location>
        <begin position="6777"/>
        <end position="7071"/>
    </location>
</feature>
<feature type="zinc finger region" description="C4-type" evidence="6">
    <location>
        <begin position="1672"/>
        <end position="1709"/>
    </location>
</feature>
<feature type="zinc finger region">
    <location>
        <begin position="4311"/>
        <end position="4327"/>
    </location>
</feature>
<feature type="zinc finger region">
    <location>
        <begin position="4354"/>
        <end position="4367"/>
    </location>
</feature>
<feature type="region of interest" description="C4" evidence="28">
    <location>
        <begin position="338"/>
        <end position="359"/>
    </location>
</feature>
<feature type="region of interest" description="C2HC" evidence="28">
    <location>
        <begin position="383"/>
        <end position="436"/>
    </location>
</feature>
<feature type="region of interest" description="HD1">
    <location>
        <begin position="2040"/>
        <end position="2363"/>
    </location>
</feature>
<feature type="region of interest" description="Y1" evidence="31">
    <location>
        <begin position="2364"/>
        <end position="2454"/>
    </location>
</feature>
<feature type="region of interest" description="ZF1" evidence="31">
    <location>
        <begin position="2368"/>
        <end position="2381"/>
    </location>
</feature>
<feature type="region of interest" description="ZF2" evidence="31">
    <location>
        <begin position="2414"/>
        <end position="2424"/>
    </location>
</feature>
<feature type="region of interest" description="CoV-Y" evidence="31">
    <location>
        <begin position="2455"/>
        <end position="2737"/>
    </location>
</feature>
<feature type="region of interest" description="Y2" evidence="31">
    <location>
        <begin position="2455"/>
        <end position="2553"/>
    </location>
</feature>
<feature type="region of interest" description="Y3" evidence="31">
    <location>
        <begin position="2554"/>
        <end position="2636"/>
    </location>
</feature>
<feature type="region of interest" description="Y4" evidence="31">
    <location>
        <begin position="2637"/>
        <end position="2737"/>
    </location>
</feature>
<feature type="region of interest" description="HD2">
    <location>
        <begin position="2761"/>
        <end position="3171"/>
    </location>
</feature>
<feature type="region of interest" description="HD3">
    <location>
        <begin position="3571"/>
        <end position="3785"/>
    </location>
</feature>
<feature type="region of interest" description="RdRp Fingers N-ter" evidence="15">
    <location>
        <begin position="4745"/>
        <end position="4959"/>
    </location>
</feature>
<feature type="region of interest" description="RdRp Palm N-ter" evidence="15">
    <location>
        <begin position="4960"/>
        <end position="4998"/>
    </location>
</feature>
<feature type="region of interest" description="RdRp Fingers C-ter" evidence="15">
    <location>
        <begin position="4999"/>
        <end position="5057"/>
    </location>
</feature>
<feature type="region of interest" description="RdRp Palm C-ter" evidence="15">
    <location>
        <begin position="5058"/>
        <end position="5193"/>
    </location>
</feature>
<feature type="region of interest" description="RdRp Thumb" evidence="15">
    <location>
        <begin position="5194"/>
        <end position="5310"/>
    </location>
</feature>
<feature type="region of interest" description="GpppA-binding" evidence="21">
    <location>
        <begin position="6318"/>
        <end position="6332"/>
    </location>
</feature>
<feature type="active site" description="For PL-PRO activity" evidence="6">
    <location>
        <position position="1592"/>
    </location>
</feature>
<feature type="active site" description="For PL-PRO activity" evidence="6">
    <location>
        <position position="1759"/>
    </location>
</feature>
<feature type="active site" description="For PL-PRO activity" evidence="6">
    <location>
        <position position="1774"/>
    </location>
</feature>
<feature type="active site" description="For 3CL-PRO activity" evidence="9">
    <location>
        <position position="3288"/>
    </location>
</feature>
<feature type="active site" description="For 3CL-PRO activity" evidence="9">
    <location>
        <position position="3395"/>
    </location>
</feature>
<feature type="active site" evidence="15">
    <location>
        <position position="5137"/>
    </location>
</feature>
<feature type="active site" evidence="15">
    <location>
        <position position="5138"/>
    </location>
</feature>
<feature type="active site" evidence="15">
    <location>
        <position position="5139"/>
    </location>
</feature>
<feature type="active site" evidence="20">
    <location>
        <position position="5998"/>
    </location>
</feature>
<feature type="active site" evidence="20">
    <location>
        <position position="6000"/>
    </location>
</feature>
<feature type="active site" evidence="20">
    <location>
        <position position="6099"/>
    </location>
</feature>
<feature type="active site" evidence="20">
    <location>
        <position position="6176"/>
    </location>
</feature>
<feature type="active site" evidence="20">
    <location>
        <position position="6181"/>
    </location>
</feature>
<feature type="active site" evidence="23">
    <location>
        <position position="6663"/>
    </location>
</feature>
<feature type="active site" evidence="23">
    <location>
        <position position="6678"/>
    </location>
</feature>
<feature type="active site" evidence="23">
    <location>
        <position position="6718"/>
    </location>
</feature>
<feature type="active site" evidence="22">
    <location>
        <position position="6821"/>
    </location>
</feature>
<feature type="active site" evidence="22">
    <location>
        <position position="6905"/>
    </location>
</feature>
<feature type="active site" evidence="22">
    <location>
        <position position="6945"/>
    </location>
</feature>
<feature type="active site" evidence="22">
    <location>
        <position position="6978"/>
    </location>
</feature>
<feature type="binding site" evidence="28">
    <location>
        <position position="338"/>
    </location>
    <ligand>
        <name>Zn(2+)</name>
        <dbReference type="ChEBI" id="CHEBI:29105"/>
        <label>1</label>
    </ligand>
</feature>
<feature type="binding site" evidence="28">
    <location>
        <position position="341"/>
    </location>
    <ligand>
        <name>Zn(2+)</name>
        <dbReference type="ChEBI" id="CHEBI:29105"/>
        <label>1</label>
    </ligand>
</feature>
<feature type="binding site" evidence="28">
    <location>
        <position position="357"/>
    </location>
    <ligand>
        <name>Zn(2+)</name>
        <dbReference type="ChEBI" id="CHEBI:29105"/>
        <label>1</label>
    </ligand>
</feature>
<feature type="binding site" evidence="28">
    <location>
        <position position="359"/>
    </location>
    <ligand>
        <name>Zn(2+)</name>
        <dbReference type="ChEBI" id="CHEBI:29105"/>
        <label>1</label>
    </ligand>
</feature>
<feature type="binding site" evidence="28">
    <location>
        <position position="383"/>
    </location>
    <ligand>
        <name>Zn(2+)</name>
        <dbReference type="ChEBI" id="CHEBI:29105"/>
        <label>2</label>
    </ligand>
</feature>
<feature type="binding site" evidence="28">
    <location>
        <position position="386"/>
    </location>
    <ligand>
        <name>Zn(2+)</name>
        <dbReference type="ChEBI" id="CHEBI:29105"/>
        <label>2</label>
    </ligand>
</feature>
<feature type="binding site" evidence="28">
    <location>
        <position position="400"/>
    </location>
    <ligand>
        <name>Zn(2+)</name>
        <dbReference type="ChEBI" id="CHEBI:29105"/>
        <label>2</label>
    </ligand>
</feature>
<feature type="binding site" evidence="28">
    <location>
        <position position="436"/>
    </location>
    <ligand>
        <name>Zn(2+)</name>
        <dbReference type="ChEBI" id="CHEBI:29105"/>
        <label>2</label>
    </ligand>
</feature>
<feature type="binding site" evidence="6">
    <location>
        <position position="1672"/>
    </location>
    <ligand>
        <name>Zn(2+)</name>
        <dbReference type="ChEBI" id="CHEBI:29105"/>
        <label>3</label>
    </ligand>
</feature>
<feature type="binding site" evidence="6">
    <location>
        <position position="1675"/>
    </location>
    <ligand>
        <name>Zn(2+)</name>
        <dbReference type="ChEBI" id="CHEBI:29105"/>
        <label>3</label>
    </ligand>
</feature>
<feature type="binding site" evidence="6">
    <location>
        <position position="1707"/>
    </location>
    <ligand>
        <name>Zn(2+)</name>
        <dbReference type="ChEBI" id="CHEBI:29105"/>
        <label>3</label>
    </ligand>
</feature>
<feature type="binding site" evidence="6">
    <location>
        <position position="1709"/>
    </location>
    <ligand>
        <name>Zn(2+)</name>
        <dbReference type="ChEBI" id="CHEBI:29105"/>
        <label>3</label>
    </ligand>
</feature>
<feature type="binding site" evidence="31">
    <location>
        <position position="2368"/>
    </location>
    <ligand>
        <name>Zn(2+)</name>
        <dbReference type="ChEBI" id="CHEBI:29105"/>
        <label>4</label>
    </ligand>
</feature>
<feature type="binding site" evidence="31">
    <location>
        <position position="2373"/>
    </location>
    <ligand>
        <name>Zn(2+)</name>
        <dbReference type="ChEBI" id="CHEBI:29105"/>
        <label>4</label>
    </ligand>
</feature>
<feature type="binding site" evidence="31">
    <location>
        <position position="2378"/>
    </location>
    <ligand>
        <name>Zn(2+)</name>
        <dbReference type="ChEBI" id="CHEBI:29105"/>
        <label>4</label>
    </ligand>
</feature>
<feature type="binding site" evidence="31">
    <location>
        <position position="2381"/>
    </location>
    <ligand>
        <name>Zn(2+)</name>
        <dbReference type="ChEBI" id="CHEBI:29105"/>
        <label>4</label>
    </ligand>
</feature>
<feature type="binding site" evidence="31">
    <location>
        <position position="2414"/>
    </location>
    <ligand>
        <name>Zn(2+)</name>
        <dbReference type="ChEBI" id="CHEBI:29105"/>
        <label>5</label>
    </ligand>
</feature>
<feature type="binding site" evidence="31">
    <location>
        <position position="2417"/>
    </location>
    <ligand>
        <name>Zn(2+)</name>
        <dbReference type="ChEBI" id="CHEBI:29105"/>
        <label>5</label>
    </ligand>
</feature>
<feature type="binding site" evidence="31">
    <location>
        <position position="2421"/>
    </location>
    <ligand>
        <name>Zn(2+)</name>
        <dbReference type="ChEBI" id="CHEBI:29105"/>
        <label>5</label>
    </ligand>
</feature>
<feature type="binding site" evidence="31">
    <location>
        <position position="2424"/>
    </location>
    <ligand>
        <name>Zn(2+)</name>
        <dbReference type="ChEBI" id="CHEBI:29105"/>
        <label>5</label>
    </ligand>
</feature>
<feature type="binding site" evidence="19">
    <location>
        <position position="4311"/>
    </location>
    <ligand>
        <name>Zn(2+)</name>
        <dbReference type="ChEBI" id="CHEBI:29105"/>
        <label>6</label>
    </ligand>
</feature>
<feature type="binding site" evidence="19">
    <location>
        <position position="4314"/>
    </location>
    <ligand>
        <name>Zn(2+)</name>
        <dbReference type="ChEBI" id="CHEBI:29105"/>
        <label>6</label>
    </ligand>
</feature>
<feature type="binding site" evidence="19">
    <location>
        <position position="4320"/>
    </location>
    <ligand>
        <name>Zn(2+)</name>
        <dbReference type="ChEBI" id="CHEBI:29105"/>
        <label>6</label>
    </ligand>
</feature>
<feature type="binding site" evidence="19">
    <location>
        <position position="4327"/>
    </location>
    <ligand>
        <name>Zn(2+)</name>
        <dbReference type="ChEBI" id="CHEBI:29105"/>
        <label>6</label>
    </ligand>
</feature>
<feature type="binding site" evidence="19">
    <location>
        <position position="4354"/>
    </location>
    <ligand>
        <name>Zn(2+)</name>
        <dbReference type="ChEBI" id="CHEBI:29105"/>
        <label>7</label>
    </ligand>
</feature>
<feature type="binding site" evidence="19">
    <location>
        <position position="4357"/>
    </location>
    <ligand>
        <name>Zn(2+)</name>
        <dbReference type="ChEBI" id="CHEBI:29105"/>
        <label>7</label>
    </ligand>
</feature>
<feature type="binding site" evidence="19">
    <location>
        <position position="4365"/>
    </location>
    <ligand>
        <name>Zn(2+)</name>
        <dbReference type="ChEBI" id="CHEBI:29105"/>
        <label>7</label>
    </ligand>
</feature>
<feature type="binding site" evidence="19">
    <location>
        <position position="4367"/>
    </location>
    <ligand>
        <name>Zn(2+)</name>
        <dbReference type="ChEBI" id="CHEBI:29105"/>
        <label>7</label>
    </ligand>
</feature>
<feature type="binding site" evidence="3">
    <location>
        <position position="4587"/>
    </location>
    <ligand>
        <name>Mn(2+)</name>
        <dbReference type="ChEBI" id="CHEBI:29035"/>
    </ligand>
</feature>
<feature type="binding site" evidence="3">
    <location>
        <position position="4596"/>
    </location>
    <ligand>
        <name>Mn(2+)</name>
        <dbReference type="ChEBI" id="CHEBI:29035"/>
    </ligand>
</feature>
<feature type="binding site" evidence="34">
    <location>
        <position position="4673"/>
    </location>
    <ligand>
        <name>Zn(2+)</name>
        <dbReference type="ChEBI" id="CHEBI:29105"/>
        <label>8</label>
    </ligand>
</feature>
<feature type="binding site" evidence="34">
    <location>
        <position position="4679"/>
    </location>
    <ligand>
        <name>Zn(2+)</name>
        <dbReference type="ChEBI" id="CHEBI:29105"/>
        <label>8</label>
    </ligand>
</feature>
<feature type="binding site" evidence="34">
    <location>
        <position position="4684"/>
    </location>
    <ligand>
        <name>Zn(2+)</name>
        <dbReference type="ChEBI" id="CHEBI:29105"/>
        <label>8</label>
    </ligand>
</feature>
<feature type="binding site" evidence="34">
    <location>
        <position position="4688"/>
    </location>
    <ligand>
        <name>Zn(2+)</name>
        <dbReference type="ChEBI" id="CHEBI:29105"/>
        <label>8</label>
    </ligand>
</feature>
<feature type="binding site" evidence="15">
    <location>
        <position position="4865"/>
    </location>
    <ligand>
        <name>Zn(2+)</name>
        <dbReference type="ChEBI" id="CHEBI:29105"/>
        <label>9</label>
    </ligand>
</feature>
<feature type="binding site" evidence="15">
    <location>
        <position position="5020"/>
    </location>
    <ligand>
        <name>Zn(2+)</name>
        <dbReference type="ChEBI" id="CHEBI:29105"/>
        <label>9</label>
    </ligand>
</feature>
<feature type="binding site" evidence="15">
    <location>
        <position position="5023"/>
    </location>
    <ligand>
        <name>Zn(2+)</name>
        <dbReference type="ChEBI" id="CHEBI:29105"/>
        <label>9</label>
    </ligand>
</feature>
<feature type="binding site" evidence="15">
    <location>
        <position position="5024"/>
    </location>
    <ligand>
        <name>Zn(2+)</name>
        <dbReference type="ChEBI" id="CHEBI:29105"/>
        <label>9</label>
    </ligand>
</feature>
<feature type="binding site" evidence="10">
    <location>
        <position position="5315"/>
    </location>
    <ligand>
        <name>Zn(2+)</name>
        <dbReference type="ChEBI" id="CHEBI:29105"/>
        <label>10</label>
    </ligand>
</feature>
<feature type="binding site" evidence="10">
    <location>
        <position position="5318"/>
    </location>
    <ligand>
        <name>Zn(2+)</name>
        <dbReference type="ChEBI" id="CHEBI:29105"/>
        <label>10</label>
    </ligand>
</feature>
<feature type="binding site" evidence="10">
    <location>
        <position position="5326"/>
    </location>
    <ligand>
        <name>Zn(2+)</name>
        <dbReference type="ChEBI" id="CHEBI:29105"/>
        <label>11</label>
    </ligand>
</feature>
<feature type="binding site" evidence="10">
    <location>
        <position position="5329"/>
    </location>
    <ligand>
        <name>Zn(2+)</name>
        <dbReference type="ChEBI" id="CHEBI:29105"/>
        <label>11</label>
    </ligand>
</feature>
<feature type="binding site" evidence="10">
    <location>
        <position position="5336"/>
    </location>
    <ligand>
        <name>Zn(2+)</name>
        <dbReference type="ChEBI" id="CHEBI:29105"/>
        <label>10</label>
    </ligand>
</feature>
<feature type="binding site" evidence="10">
    <location>
        <position position="5339"/>
    </location>
    <ligand>
        <name>Zn(2+)</name>
        <dbReference type="ChEBI" id="CHEBI:29105"/>
        <label>10</label>
    </ligand>
</feature>
<feature type="binding site" evidence="10">
    <location>
        <position position="5343"/>
    </location>
    <ligand>
        <name>Zn(2+)</name>
        <dbReference type="ChEBI" id="CHEBI:29105"/>
        <label>11</label>
    </ligand>
</feature>
<feature type="binding site" evidence="10">
    <location>
        <position position="5349"/>
    </location>
    <ligand>
        <name>Zn(2+)</name>
        <dbReference type="ChEBI" id="CHEBI:29105"/>
        <label>11</label>
    </ligand>
</feature>
<feature type="binding site" evidence="10">
    <location>
        <position position="5360"/>
    </location>
    <ligand>
        <name>Zn(2+)</name>
        <dbReference type="ChEBI" id="CHEBI:29105"/>
        <label>12</label>
    </ligand>
</feature>
<feature type="binding site" evidence="10">
    <location>
        <position position="5365"/>
    </location>
    <ligand>
        <name>Zn(2+)</name>
        <dbReference type="ChEBI" id="CHEBI:29105"/>
        <label>12</label>
    </ligand>
</feature>
<feature type="binding site" evidence="10">
    <location>
        <position position="5382"/>
    </location>
    <ligand>
        <name>Zn(2+)</name>
        <dbReference type="ChEBI" id="CHEBI:29105"/>
        <label>12</label>
    </ligand>
</feature>
<feature type="binding site" evidence="10">
    <location>
        <position position="5385"/>
    </location>
    <ligand>
        <name>Zn(2+)</name>
        <dbReference type="ChEBI" id="CHEBI:29105"/>
        <label>12</label>
    </ligand>
</feature>
<feature type="binding site" evidence="1">
    <location>
        <begin position="5592"/>
        <end position="5599"/>
    </location>
    <ligand>
        <name>ATP</name>
        <dbReference type="ChEBI" id="CHEBI:30616"/>
    </ligand>
</feature>
<feature type="binding site" evidence="20">
    <location>
        <position position="6115"/>
    </location>
    <ligand>
        <name>Zn(2+)</name>
        <dbReference type="ChEBI" id="CHEBI:29105"/>
        <label>13</label>
    </ligand>
</feature>
<feature type="binding site" evidence="20">
    <location>
        <position position="6118"/>
    </location>
    <ligand>
        <name>Zn(2+)</name>
        <dbReference type="ChEBI" id="CHEBI:29105"/>
        <label>13</label>
    </ligand>
</feature>
<feature type="binding site" evidence="20">
    <location>
        <position position="6134"/>
    </location>
    <ligand>
        <name>Zn(2+)</name>
        <dbReference type="ChEBI" id="CHEBI:29105"/>
        <label>13</label>
    </ligand>
</feature>
<feature type="binding site" evidence="20">
    <location>
        <position position="6137"/>
    </location>
    <ligand>
        <name>Zn(2+)</name>
        <dbReference type="ChEBI" id="CHEBI:29105"/>
        <label>13</label>
    </ligand>
</feature>
<feature type="binding site" evidence="20">
    <location>
        <position position="6165"/>
    </location>
    <ligand>
        <name>Zn(2+)</name>
        <dbReference type="ChEBI" id="CHEBI:29105"/>
        <label>14</label>
    </ligand>
</feature>
<feature type="binding site" evidence="20">
    <location>
        <position position="6169"/>
    </location>
    <ligand>
        <name>Zn(2+)</name>
        <dbReference type="ChEBI" id="CHEBI:29105"/>
        <label>14</label>
    </ligand>
</feature>
<feature type="binding site" evidence="20">
    <location>
        <position position="6172"/>
    </location>
    <ligand>
        <name>Zn(2+)</name>
        <dbReference type="ChEBI" id="CHEBI:29105"/>
        <label>14</label>
    </ligand>
</feature>
<feature type="binding site" evidence="20">
    <location>
        <position position="6187"/>
    </location>
    <ligand>
        <name>Zn(2+)</name>
        <dbReference type="ChEBI" id="CHEBI:29105"/>
        <label>14</label>
    </ligand>
</feature>
<feature type="binding site" evidence="21">
    <location>
        <begin position="6239"/>
        <end position="6245"/>
    </location>
    <ligand>
        <name>S-adenosyl-L-methionine</name>
        <dbReference type="ChEBI" id="CHEBI:59789"/>
    </ligand>
</feature>
<feature type="binding site" evidence="21">
    <location>
        <position position="6356"/>
    </location>
    <ligand>
        <name>Zn(2+)</name>
        <dbReference type="ChEBI" id="CHEBI:29105"/>
        <label>15</label>
    </ligand>
</feature>
<feature type="binding site" evidence="21">
    <location>
        <position position="6378"/>
    </location>
    <ligand>
        <name>Zn(2+)</name>
        <dbReference type="ChEBI" id="CHEBI:29105"/>
        <label>15</label>
    </ligand>
</feature>
<feature type="binding site" evidence="21">
    <location>
        <position position="6389"/>
    </location>
    <ligand>
        <name>Zn(2+)</name>
        <dbReference type="ChEBI" id="CHEBI:29105"/>
        <label>15</label>
    </ligand>
</feature>
<feature type="binding site" evidence="21">
    <location>
        <position position="6392"/>
    </location>
    <ligand>
        <name>Zn(2+)</name>
        <dbReference type="ChEBI" id="CHEBI:29105"/>
        <label>15</label>
    </ligand>
</feature>
<feature type="site" description="Cleavage" evidence="1">
    <location>
        <begin position="193"/>
        <end position="194"/>
    </location>
</feature>
<feature type="site" description="Cleavage; by PL-PRO" evidence="1">
    <location>
        <begin position="853"/>
        <end position="854"/>
    </location>
</feature>
<feature type="site" description="Cleavage; by PL-PRO" evidence="1">
    <location>
        <begin position="2740"/>
        <end position="2741"/>
    </location>
</feature>
<feature type="site" description="Cleavage; by 3CL-PRO" evidence="1">
    <location>
        <begin position="3247"/>
        <end position="3248"/>
    </location>
</feature>
<feature type="site" description="Cleavage; by 3CL-PRO" evidence="1">
    <location>
        <begin position="3553"/>
        <end position="3554"/>
    </location>
</feature>
<feature type="site" description="Cleavage; by 3CL-PRO" evidence="1">
    <location>
        <begin position="3845"/>
        <end position="3846"/>
    </location>
</feature>
<feature type="site" description="Cleavage; by 3CL-PRO" evidence="1">
    <location>
        <begin position="3928"/>
        <end position="3929"/>
    </location>
</feature>
<feature type="site" description="Cleavage; by 3CL-PRO" evidence="1">
    <location>
        <begin position="4127"/>
        <end position="4128"/>
    </location>
</feature>
<feature type="site" description="Cleavage; by 3CL-PRO" evidence="1">
    <location>
        <begin position="4237"/>
        <end position="4238"/>
    </location>
</feature>
<feature type="site" description="Cleavage; by 3CL-PRO" evidence="1">
    <location>
        <begin position="4377"/>
        <end position="4378"/>
    </location>
</feature>
<feature type="site" description="Cleavage; by 3CL-PRO" evidence="1">
    <location>
        <begin position="5310"/>
        <end position="5311"/>
    </location>
</feature>
<feature type="site" description="Cleavage; by 3CL-PRO" evidence="1">
    <location>
        <begin position="5908"/>
        <end position="5909"/>
    </location>
</feature>
<feature type="site" description="Cleavage; by 3CL-PRO" evidence="1">
    <location>
        <begin position="6432"/>
        <end position="6433"/>
    </location>
</feature>
<feature type="site" description="Cleavage; by 3CL-PRO" evidence="1">
    <location>
        <begin position="6775"/>
        <end position="6776"/>
    </location>
</feature>
<feature type="disulfide bond" evidence="32">
    <location>
        <begin position="2230"/>
        <end position="2258"/>
    </location>
</feature>
<feature type="disulfide bond" evidence="32">
    <location>
        <begin position="2248"/>
        <end position="2255"/>
    </location>
</feature>
<feature type="helix" evidence="47">
    <location>
        <begin position="168"/>
        <end position="176"/>
    </location>
</feature>
<feature type="strand" evidence="47">
    <location>
        <begin position="178"/>
        <end position="180"/>
    </location>
</feature>
<feature type="helix" evidence="47">
    <location>
        <begin position="183"/>
        <end position="190"/>
    </location>
</feature>
<feature type="helix" evidence="40">
    <location>
        <begin position="1110"/>
        <end position="1113"/>
    </location>
</feature>
<feature type="strand" evidence="40">
    <location>
        <begin position="1116"/>
        <end position="1118"/>
    </location>
</feature>
<feature type="strand" evidence="40">
    <location>
        <begin position="1120"/>
        <end position="1128"/>
    </location>
</feature>
<feature type="helix" evidence="40">
    <location>
        <begin position="1130"/>
        <end position="1135"/>
    </location>
</feature>
<feature type="strand" evidence="40">
    <location>
        <begin position="1141"/>
        <end position="1146"/>
    </location>
</feature>
<feature type="helix" evidence="40">
    <location>
        <begin position="1156"/>
        <end position="1163"/>
    </location>
</feature>
<feature type="turn" evidence="40">
    <location>
        <begin position="1164"/>
        <end position="1166"/>
    </location>
</feature>
<feature type="helix" evidence="40">
    <location>
        <begin position="1167"/>
        <end position="1179"/>
    </location>
</feature>
<feature type="strand" evidence="40">
    <location>
        <begin position="1187"/>
        <end position="1191"/>
    </location>
</feature>
<feature type="turn" evidence="40">
    <location>
        <begin position="1193"/>
        <end position="1195"/>
    </location>
</feature>
<feature type="strand" evidence="40">
    <location>
        <begin position="1196"/>
        <end position="1203"/>
    </location>
</feature>
<feature type="helix" evidence="40">
    <location>
        <begin position="1207"/>
        <end position="1209"/>
    </location>
</feature>
<feature type="helix" evidence="40">
    <location>
        <begin position="1213"/>
        <end position="1215"/>
    </location>
</feature>
<feature type="helix" evidence="40">
    <location>
        <begin position="1216"/>
        <end position="1223"/>
    </location>
</feature>
<feature type="strand" evidence="40">
    <location>
        <begin position="1226"/>
        <end position="1231"/>
    </location>
</feature>
<feature type="helix" evidence="40">
    <location>
        <begin position="1243"/>
        <end position="1253"/>
    </location>
</feature>
<feature type="strand" evidence="40">
    <location>
        <begin position="1256"/>
        <end position="1263"/>
    </location>
</feature>
<feature type="helix" evidence="40">
    <location>
        <begin position="1265"/>
        <end position="1272"/>
    </location>
</feature>
<feature type="strand" evidence="39">
    <location>
        <begin position="1485"/>
        <end position="1494"/>
    </location>
</feature>
<feature type="strand" evidence="39">
    <location>
        <begin position="1496"/>
        <end position="1501"/>
    </location>
</feature>
<feature type="strand" evidence="39">
    <location>
        <begin position="1503"/>
        <end position="1505"/>
    </location>
</feature>
<feature type="helix" evidence="39">
    <location>
        <begin position="1507"/>
        <end position="1510"/>
    </location>
</feature>
<feature type="strand" evidence="39">
    <location>
        <begin position="1513"/>
        <end position="1516"/>
    </location>
</feature>
<feature type="helix" evidence="39">
    <location>
        <begin position="1528"/>
        <end position="1530"/>
    </location>
</feature>
<feature type="strand" evidence="39">
    <location>
        <begin position="1534"/>
        <end position="1537"/>
    </location>
</feature>
<feature type="helix" evidence="41">
    <location>
        <begin position="1545"/>
        <end position="1553"/>
    </location>
</feature>
<feature type="helix" evidence="41">
    <location>
        <begin position="1560"/>
        <end position="1570"/>
    </location>
</feature>
<feature type="helix" evidence="41">
    <location>
        <begin position="1571"/>
        <end position="1573"/>
    </location>
</feature>
<feature type="strand" evidence="41">
    <location>
        <begin position="1576"/>
        <end position="1579"/>
    </location>
</feature>
<feature type="strand" evidence="41">
    <location>
        <begin position="1582"/>
        <end position="1585"/>
    </location>
</feature>
<feature type="turn" evidence="41">
    <location>
        <begin position="1589"/>
        <end position="1591"/>
    </location>
</feature>
<feature type="helix" evidence="41">
    <location>
        <begin position="1592"/>
        <end position="1601"/>
    </location>
</feature>
<feature type="strand" evidence="41">
    <location>
        <begin position="1607"/>
        <end position="1611"/>
    </location>
</feature>
<feature type="helix" evidence="41">
    <location>
        <begin position="1612"/>
        <end position="1622"/>
    </location>
</feature>
<feature type="helix" evidence="41">
    <location>
        <begin position="1627"/>
        <end position="1636"/>
    </location>
</feature>
<feature type="helix" evidence="41">
    <location>
        <begin position="1647"/>
        <end position="1655"/>
    </location>
</feature>
<feature type="strand" evidence="41">
    <location>
        <begin position="1658"/>
        <end position="1662"/>
    </location>
</feature>
<feature type="strand" evidence="41">
    <location>
        <begin position="1665"/>
        <end position="1672"/>
    </location>
</feature>
<feature type="turn" evidence="41">
    <location>
        <begin position="1673"/>
        <end position="1675"/>
    </location>
</feature>
<feature type="strand" evidence="41">
    <location>
        <begin position="1676"/>
        <end position="1683"/>
    </location>
</feature>
<feature type="helix" evidence="41">
    <location>
        <begin position="1684"/>
        <end position="1687"/>
    </location>
</feature>
<feature type="strand" evidence="41">
    <location>
        <begin position="1688"/>
        <end position="1692"/>
    </location>
</feature>
<feature type="helix" evidence="41">
    <location>
        <begin position="1696"/>
        <end position="1700"/>
    </location>
</feature>
<feature type="strand" evidence="41">
    <location>
        <begin position="1703"/>
        <end position="1706"/>
    </location>
</feature>
<feature type="strand" evidence="41">
    <location>
        <begin position="1708"/>
        <end position="1721"/>
    </location>
</feature>
<feature type="strand" evidence="41">
    <location>
        <begin position="1723"/>
        <end position="1740"/>
    </location>
</feature>
<feature type="strand" evidence="41">
    <location>
        <begin position="1745"/>
        <end position="1752"/>
    </location>
</feature>
<feature type="strand" evidence="41">
    <location>
        <begin position="1759"/>
        <end position="1766"/>
    </location>
</feature>
<feature type="strand" evidence="41">
    <location>
        <begin position="1769"/>
        <end position="1774"/>
    </location>
</feature>
<feature type="strand" evidence="41">
    <location>
        <begin position="1777"/>
        <end position="1794"/>
    </location>
</feature>
<feature type="strand" evidence="41">
    <location>
        <begin position="1797"/>
        <end position="1799"/>
    </location>
</feature>
<feature type="helix" evidence="45">
    <location>
        <begin position="3258"/>
        <end position="3261"/>
    </location>
</feature>
<feature type="strand" evidence="45">
    <location>
        <begin position="3264"/>
        <end position="3269"/>
    </location>
</feature>
<feature type="strand" evidence="45">
    <location>
        <begin position="3272"/>
        <end position="3279"/>
    </location>
</feature>
<feature type="strand" evidence="45">
    <location>
        <begin position="3282"/>
        <end position="3286"/>
    </location>
</feature>
<feature type="helix" evidence="45">
    <location>
        <begin position="3287"/>
        <end position="3290"/>
    </location>
</feature>
<feature type="helix" evidence="45">
    <location>
        <begin position="3293"/>
        <end position="3295"/>
    </location>
</feature>
<feature type="strand" evidence="44">
    <location>
        <begin position="3296"/>
        <end position="3298"/>
    </location>
</feature>
<feature type="helix" evidence="45">
    <location>
        <begin position="3301"/>
        <end position="3307"/>
    </location>
</feature>
<feature type="helix" evidence="45">
    <location>
        <begin position="3310"/>
        <end position="3312"/>
    </location>
</feature>
<feature type="strand" evidence="45">
    <location>
        <begin position="3313"/>
        <end position="3317"/>
    </location>
</feature>
<feature type="strand" evidence="45">
    <location>
        <begin position="3319"/>
        <end position="3321"/>
    </location>
</feature>
<feature type="strand" evidence="45">
    <location>
        <begin position="3323"/>
        <end position="3325"/>
    </location>
</feature>
<feature type="strand" evidence="45">
    <location>
        <begin position="3327"/>
        <end position="3333"/>
    </location>
</feature>
<feature type="strand" evidence="45">
    <location>
        <begin position="3336"/>
        <end position="3343"/>
    </location>
</feature>
<feature type="strand" evidence="45">
    <location>
        <begin position="3350"/>
        <end position="3353"/>
    </location>
</feature>
<feature type="strand" evidence="45">
    <location>
        <begin position="3361"/>
        <end position="3368"/>
    </location>
</feature>
<feature type="strand" evidence="45">
    <location>
        <begin position="3371"/>
        <end position="3379"/>
    </location>
</feature>
<feature type="strand" evidence="45">
    <location>
        <begin position="3398"/>
        <end position="3403"/>
    </location>
</feature>
<feature type="strand" evidence="45">
    <location>
        <begin position="3406"/>
        <end position="3416"/>
    </location>
</feature>
<feature type="strand" evidence="43">
    <location>
        <begin position="3418"/>
        <end position="3420"/>
    </location>
</feature>
<feature type="strand" evidence="45">
    <location>
        <begin position="3422"/>
        <end position="3425"/>
    </location>
</feature>
<feature type="strand" evidence="42">
    <location>
        <begin position="3427"/>
        <end position="3429"/>
    </location>
</feature>
<feature type="helix" evidence="46">
    <location>
        <begin position="3432"/>
        <end position="3434"/>
    </location>
</feature>
<feature type="strand" evidence="45">
    <location>
        <begin position="3437"/>
        <end position="3440"/>
    </location>
</feature>
<feature type="helix" evidence="45">
    <location>
        <begin position="3451"/>
        <end position="3463"/>
    </location>
</feature>
<feature type="helix" evidence="45">
    <location>
        <begin position="3477"/>
        <end position="3486"/>
    </location>
</feature>
<feature type="helix" evidence="45">
    <location>
        <begin position="3496"/>
        <end position="3505"/>
    </location>
</feature>
<feature type="helix" evidence="45">
    <location>
        <begin position="3509"/>
        <end position="3521"/>
    </location>
</feature>
<feature type="strand" evidence="46">
    <location>
        <begin position="3528"/>
        <end position="3530"/>
    </location>
</feature>
<feature type="strand" evidence="45">
    <location>
        <begin position="3531"/>
        <end position="3533"/>
    </location>
</feature>
<feature type="helix" evidence="45">
    <location>
        <begin position="3540"/>
        <end position="3546"/>
    </location>
</feature>
<organism>
    <name type="scientific">Middle East respiratory syndrome-related coronavirus (isolate United Kingdom/H123990006/2012)</name>
    <name type="common">MERS-CoV</name>
    <name type="synonym">Betacoronavirus England 1</name>
    <dbReference type="NCBI Taxonomy" id="1263720"/>
    <lineage>
        <taxon>Viruses</taxon>
        <taxon>Riboviria</taxon>
        <taxon>Orthornavirae</taxon>
        <taxon>Pisuviricota</taxon>
        <taxon>Pisoniviricetes</taxon>
        <taxon>Nidovirales</taxon>
        <taxon>Cornidovirineae</taxon>
        <taxon>Coronaviridae</taxon>
        <taxon>Orthocoronavirinae</taxon>
        <taxon>Betacoronavirus</taxon>
        <taxon>Merbecovirus</taxon>
        <taxon>Middle East respiratory syndrome-related coronavirus</taxon>
    </lineage>
</organism>
<sequence>MSFVAGVTAQGARGTYRAALNSEKHQDHVSLTVPLCGSGNLVEKLSPWFMDGENAYEVVKAMLLKKEPLLYVPIRLAGHTRHLPGPRVYLVERLIACENPFMVNQLAYSSSANGSLVGTTLQGKPIGMFFPYDIELVTGKQNILLRKYGRGGYHYTPFHYERDNTSCPEWMDDFEADPKGKYAQNLLKKLIGGDVTPVDQYMCGVDGKPISAYAFLMAKDGITKLADVEADVAARADDEGFITLKNNLYRLVWHVERKDVPYPKQSIFTINSVVQKDGVENTPPHYFTLGCKILTLTPRNKWSGVSDLSLKQKLLYTFYGKESLENPTYIYHSAFIECGSCGNDSWLTGNAIQGFACGCGASYTANDVEVQSSGMIKPNALLCATCPFAKGDSCSSNCKHSVAQLVSYLSERCNVIADSKSFTLIFGGVAYAYFGCEEGTMYFVPRAKSVVSRIGDSIFTGCTGSWNKVTQIANMFLEQTQHSLNFVGEFVVNDVVLAILSGTTTNVDKIRQLLKGVTLDKLRDYLADYDVAVTAGPFMDNAINVGGTGLQYAAITAPYVVLTGLGESFKKVATIPYKVCNSVKDTLTYYAHSVLYRVFPYDMDSGVSSFSELLFDCVDLSVASTYFLVRLLQDKTGDFMSTIITSCQTAVSKLLDTCFEATEATFNFLLDLAGLFRIFLRNAYVYTSQGFVVVNGKVSTLVKQVLDLLNKGMQLLHTKVSWAGSNISAVIYSGRESLIFPSGTYYCVTTKAKSVQQDLDVILPGEFSKKQLGLLQPTDNSTTVSVTVSSNMVETVVGQLEQTNMHSPDVIVGDYVIISEKLFVRSKEEDGFAFYPACTNGHAVPTLFRLKGGAPVKKVAFGGDQVHEVAAVRSVTVEYNIHAVLDTLLASSSLRTFVVDKSLSIEEFADVVKEQVSDLLVKLLRGMPIPDFDLDDFIDAPCYCFNAEGDASWSSTMIFSLHPVECDEECSEVEASDLEEGESECISETSTEQVDVSHEISDDEWAAAVDEAFPLDEAEDVTESVQEEAQPVEVPVEDIAQVVIADTLQETPVVSDTVEVPPQVVKLPSEPQTIQPEVKEVAPVYEADTEQTQSVTVKPKRLRKKRNVDPLSNFEHKVITECVTIVLGDAIQVAKCYGESVLVNAANTHLKHGGGIAGAINAASKGAVQKESDEYILAKGPLQVGDSVLLQGHSLAKNILHVVGPDARAKQDVSLLSKCYKAMNAYPLVVTPLVSAGIFGVKPAVSFDYLIREAKTRVLVVVNSQDVYKSLTIVDIPQSLTFSYDGLRGAIRKAKDYGFTVFVCTDNSANTKVLRNKGVDYTKKFLTVDGVQYYCYTSKDTLDDILQQANKSVGIISMPLGYVSHGLDLIQAGSVVRRVNVPYVCLLANKEQEAILMSEDVKLNPSEDFIKHVRTNGGYNSWHLVEGELLVQDLRLNKLLHWSDQTICYKDSVFYVVKNSTAFPFETLSACRAYLDSRTTQQLTIEVLVTVDGVNFRTVVLNNKNTYRSQLGCVFFNGADISDTIPDEKQNGHSLYLADNLTADETKALKELYGPVDPTFLHRFYSLKAAVHKWKMVVCDKVRSLKLSDNNCYLNAVIMTLDLLKDIKFVIPALQHAFMKHKGGDSTDFIALIMAYGNCTFGAPDDASRLLHTVLAKAELCCSARMVWREWCNVCGIKDVVLQGLKACCYVGVQTVEDLRARMTYVCQCGGERHRQIVEHTTPWLLLSGTPNEKLVTTSTAPDFVAFNVFQGIETAVGHYVHARLKGGLILKFDSGTVSKTSDWKCKVTDVLFPGQKYSSDCNVVRYSLDGNFRTEVDPDLSAFYVKDGKYFTSEPPVTYSPATILAGSVYTNSCLVSSDGQPGGDAISLSFNNLLGFDSSKPVTKKYTYSFLPKEDGDVLLAEFDTYDPIYKNGAMYKGKPILWVNKASYDTNLNKFNRASLRQIFDVAPIELENKFTPLSVESTPVEPPTVDVVALQQEMTIVKCKGLNKPFVKDNVSFVADDSGTPVVEYLSKEDLHTLYVDPKYQVIVLKDNVLSSMLRLHTVESGDINVVAASGSLTRKVKLLFRASFYFKEFATRTFTATTAVGSCIKSVVRHLGVTKGILTGCFSFVKMLFMLPLAYFSDSKLGTTEVKVSALKTAGVVTGNVVKQCCTAAVDLSMDKLRRVDWKSTLRLLLMLCTTMVLLSSVYHLYVFNQVLSSDVMFEDAQGLKKFYKEVRAYLGISSACDGLASAYRANSFDVPTFCANRSAMCNWCLISQDSITHYPALKMVQTHLSHYVLNIDWLWFAFETGLAYMLYTSAFNWLLLAGTLHYFFAQTSIFVDWRSYNYAVSSAFWLFTHIPMAGLVRMYNLLACLWLLRKFYQHVINGCKDTACLLCYKRNRLTRVEASTVVCGGKRTFYITANGGISFCRRHNWNCVDCDTAGVGNTFICEEVANDLTTALRRPINATDRSHYYVDSVTVKETVVQFNYRRDGQPFYERFPLCAFTNLDKLKFKEVCKTTTGIPEYNFIIYDSSDRGQESLARSACVYYSQVLCKSILLVDSSLVTSVGDSSEIATKMFDSFVNSFVSLYNVTRDKLEKLISTARDGVRRGDNFHSVLTTFIDAARGPAGVESDVETNEIVDSVQYAHKHDIQITNESYNNYVPSYVKPDSVSTSDLGSLIDCNAASVNQIVLRNSNGACIWNAAAYMKLSDALKRQIRIACRKCNLAFRLTTSKLRANDNILSVRFTANKIVGGAPTWFNALRDFTLKGYVLATIIVFLCAVLMYLCLPTFSMVPVEFYEDRILDFKVLDNGIIRDVNPDDKCFANKHRSFTQWYHEHVGGVYDNSITCPLTVAVIAGVAGARIPDVPTTLAWVNNQIIFFVSRVFANTGSVCYTPIDEIPYKSFSDSGCILPSECTMFRDAEGRMTPYCHDPTVLPGAFAYSQMRPHVRYDLYDGNMFIKFPEVVFESTLRITRTLSTQYCRFGSCEYAQEGVCITTNGSWAIFNDHHLNRPGVYCGSDFIDIVRRLAVSLFQPITYFQLTTSLVLGIGLCAFLTLLFYYINKVKRAFADYTQCAVIAVVAAVLNSLCICFVASIPLCIVPYTALYYYATFYFTNEPAFIMHVSWYIMFGPIVPIWMTCVYTVAMCFRHFFWVLAYFSKKHVEVFTDGKLNCSFQDAASNIFVINKDTYAALRNSLTNDAYSRFLGLFNKYKYFSGAMETAAYREAAACHLAKALQTYSETGSDLLYQPPNCSITSGVLQSGLVKMSHPSGDVEACMVQVTCGSMTLNGLWLDNTVWCPRHVMCPADQLSDPNYDALLISMTNHSFSVQKHIGAPANLRVVGHAMQGTLLKLTVDVANPSTPAYTFTTVKPGAAFSVLACYNGRPTGTFTVVMRPNYTIKGSFLCGSCGSVGYTKEGSVINFCYMHQMELANGTHTGSAFDGTMYGAFMDKQVHQVQLTDKYCSVNVVAWLYAAILNGCAWFVKPNRTSVVSFNEWALANQFTEFVGTQSVDMLAVKTGVAIEQLLYAIQQLYTGFQGKQILGSTMLEDEFTPEDVNMQIMGVVMQSGVRKVTYGTAHWLFATLVSTYVIILQATKFTLWNYLFETIPTQLFPLLFVTMAFVMLLVKHKHTFLTLFLLPVAICLTYANIVYEPTTPISSALIAVANWLAPTNAYMRTTHTDIGVYISMSLVLVIVVKRLYNPSLSNFALALCSGVMWLYTYSIGEASSPIAYLVFVTTLTSDYTITVFVTVNLAKVCTYAIFAYSPQLTLVFPEVKMILLLYTCLGFMCTCYFGVFSLLNLKLRAPMGVYDFKVSTQEFRFMTANNLTAPRNSWEAMALNFKLIGIGGTPCIKVAAMQSKLTDLKCTSVVLLSVLQQLHLEANSRAWAFCVKCHNDILAATDPSEAFEKFVSLFATLMTFSGNVDLDALASDIFDTPSVLQATLSEFSHLATFAELEAAQKAYQEAMDSGDTSPQVLKALQKAVNIAKNAYEKDKAVARKLERMADQAMTSMYKQARAEDKKAKIVSAMQTMLFGMIKKLDNDVLNGIISNARNGCIPLSVIPLCASNKLRVVIPDFTVWNQVVTYPSLNYAGALWDITVINNVDNEIVKSSDVVDSNENLTWPLVLECTRASTSAVKLQNNEIKPSGLKTMVVSAGQEQTNCNTSSLAYYEPVQGRKMLMALLSDNAYLKWARVEGKDGFVSVELQPPCKFLIAGPKGPEIRYLYFVKNLNNLHRGQVLGHIAATVRLQAGSNTEFASNSSVLSLVNFTVDPQKAYLDFVNAGGAPLTNCVKMLTPKTGTGIAISVKPESTADQETYGGASVCLYCRAHIEHPDVSGVCKYKGKFVQIPAQCVRDPVGFCLSNTPCNVCQYWIGYGCNCDSLRQAALPQSKDSNFLKRVRGSIVNARIEPCSSGLSTDVVFRAFDICNYKAKVAGIGKYYKTNTCRFVELDDQGHHLDSYFVVKRHTMENYELEKHCYDLLRDCDAVAPHDFFIFDVDKVKTPHIVRQRLTEYTMMDLVYALRHFDQNSEVLKAILVKYGCCDVTYFENKLWFDFVENPSVIGVYHKLGERVRQAILNTVKFCDHMVKAGLVGVLTLDNQDLNGKWYDFGDFVITQPGSGVAIVDSYYSYLMPVLSMTDCLAAETHRDCDFNKPLIEWPLTEYDFTDYKVQLFEKYFKYWDQTYHANCVNCTDDRCVLHCANFNVLFAMTMPKTCFGPIVRKIFVDGVPFVVSCGYHYKELGLVMNMDVSLHRHRLSLKELMMYAADPAMHIASSNAFLDLRTSCFSVAALTTGLTFQTVRPGNFNQDFYDFVVSKGFFKEGSSVTLKHFFFAQDGNAAITDYNYYSYNLPTMCDIKQMLFCMEVVNKYFEIYDGGCLNASEVVVNNLDKSAGHPFNKFGKARVYYESMSYQEQDELFAMTKRNVIPTMTQMNLKYAISAKNRARTVAGVSILSTMTNRQYHQKMLKSMAATRGATCVIGTTKFYGGWDFMLKTLYKDVDNPHLMGWDYPKCDRAMPNMCRIFASLILARKHGTCCTTRDRFYRLANECAQVLSEYVLCGGGYYVKPGGTSSGDATTAYANSVFNILQATTANVSALMGANGNKIVDKEVKDMQFDLYVNVYRSTSPDPKFVDKYYAFLNKHFSMMILSDDGVVCYNSDYAAKGYIAGIQNFKETLYYQNNVFMSEAKCWVETDLKKGPHEFCSQHTLYIKDGDDGYFLPYPDPSRILSAGCFVDDIVKTDGTLMVERFVSLAIDAYPLTKHEDIEYQNVFWVYLQYIEKLYKDLTGHMLDSYSVMLCGDNSAKFWEEAFYRDLYSSPTTLQAVGSCVVCHSQTSLRCGTCIRRPFLCCKCCYDHVIATPHKMVLSVSPYVCNAPGCGVSDVTKLYLGGMSYFCVDHRPVCSFPLCANGLVFGLYKNMCTGSPSIVEFNRLATCDWTESGDYTLANTTTEPLKLFAAETLRATEEASKQSYAIATIKEIVGERQLLLVWEAGKSKPPLNRNYVFTGYHITKNSKVQLGEYIFERIDYSDAVSYKSSTTYKLTVGDIFVLTSHSVATLTAPTIVNQERYVKITGLYPTITVPEEFASHVANFQKSGYSKYVTVQGPPGTGKSHFAIGLAIYYPTARVVYTACSHAAVDALCEKAFKYLNIAKCSRIIPAKARVECYDRFKVNETNSQYLFSTINALPETSADILVVDEVSMCTNYDLSIINARIKAKHIVYVGDPAQLPAPRTLLTRGTLEPENFNSVTRLMCNLGPDIFLSMCYRCPKEIVSTVSALVYNNKLLAKKELSGQCFKILYKGNVTHDASSAINRPQLTFVKNFITANPAWSKAVFISPYNSQNAVARSMLGLTTQTVDSSQGSEYQYVIFCQTADTAHANNINRFNVAITRAQKGILCVMTSQALFESLEFTELSFTNYKLQSQIVTGLFKDCSRETSGLSPAYAPTYVSVDDKYKTSDELCVNLNLPANVPYSRVISRMGFKLDATVPGYPKLFITREEAVRQVRSWIGFDVEGAHASRNACGTNVPLQLGFSTGVNFVVQPVGVVDTEWGNMLTGIAARPPPGEQFKHLVPLMHKGAAWPIVRRRIVQMLSDTLDKLSDYCTFVCWAHGFELTSASYFCKIGKEQKCCMCNRRAAAYSSPLQSYACWTHSCGYDYVYNPFFVDVQQWGYVGNLATNHDRYCSVHQGAHVASNDAIMTRCLAIHSCFIERVDWDIEYPYISHEKKLNSCCRIVERNVVRAALLAGSFDKVYDIGNPKGIPIVDDPVVDWHYFDAQPLTRKVQQLFYTEDMASRFADGLCLFWNCNVPKYPNNAIVCRFDTRVHSEFNLPGCDGGSLYVNKHAFHTPAYDVSAFRDLKPLPFFYYSTTPCEVHGNGSMIEDIDYVPLKSAVCITACNLGGAVCRKHATEYREYMEAYNLVSASGFRLWCYKTFDIYNLWSTFTKVQGLENIAFNFVKQGHFIGVEGELPVAVVNDKIFTKSGVNDICMFENKTTLPTNIAFELYAKRAVRSHPDFKLLHNLQADICYKFVLWDYERSNIYGTATIGVCKYTDIDVNSALNICFDIRDNGSLEKFMSTPNAIFISDRKIKKYPCMVGPDYAYFNGAIIRDSDVVKQPVKFYLYKKVNNEFIDPTECIYTQSRSCSDFLPLSDMEKDFLSFDSDVFIKKYGLENYAFEHVVYGDFSHTTLGGLHLLIGLYKKQQEGHIIMEEMLKGSSTIHNYFITETNTAAFKAVCSVIDLKLDDFVMILKSQDLGVVSKVVKVPIDLTMIEFMLWCKDGQVQTFYPRLQASADWKPGHAMPSLFKVQNVNLERCELANYKQSIPMPRGVHMNIAKYMQLCQYLNTCTLAVPANMRVIHFGAGSDKGIAPGTSVLRQWLPTDAIIIDNDLNEFVSDADITLFGDCVTVRVGQQVDLVISDMYDPTTKNVTGSNESKALFFTYLCNLINNNLALGGSVAIKITEHSWSVELYELMGKFAWWTVFCTNANASSSEGFLLGINYLGTIKENIDGGAMHANYIFWRNSTPMNLSTYSLFDLSKFQLKLKGTPVLQLKESQINELVISLLSQGKLLIRDNDTLSVSTDVLVNTYRKLR</sequence>